<evidence type="ECO:0000250" key="1">
    <source>
        <dbReference type="UniProtKB" id="Q60972"/>
    </source>
</evidence>
<evidence type="ECO:0000269" key="2">
    <source>
    </source>
</evidence>
<evidence type="ECO:0000269" key="3">
    <source>
    </source>
</evidence>
<evidence type="ECO:0000269" key="4">
    <source>
    </source>
</evidence>
<evidence type="ECO:0000269" key="5">
    <source>
    </source>
</evidence>
<evidence type="ECO:0000269" key="6">
    <source>
    </source>
</evidence>
<evidence type="ECO:0000269" key="7">
    <source>
    </source>
</evidence>
<evidence type="ECO:0000269" key="8">
    <source>
    </source>
</evidence>
<evidence type="ECO:0000269" key="9">
    <source>
    </source>
</evidence>
<evidence type="ECO:0000269" key="10">
    <source>
    </source>
</evidence>
<evidence type="ECO:0000269" key="11">
    <source>
    </source>
</evidence>
<evidence type="ECO:0000269" key="12">
    <source>
    </source>
</evidence>
<evidence type="ECO:0000269" key="13">
    <source>
    </source>
</evidence>
<evidence type="ECO:0000269" key="14">
    <source>
    </source>
</evidence>
<evidence type="ECO:0000269" key="15">
    <source>
    </source>
</evidence>
<evidence type="ECO:0000269" key="16">
    <source>
    </source>
</evidence>
<evidence type="ECO:0000269" key="17">
    <source>
    </source>
</evidence>
<evidence type="ECO:0000269" key="18">
    <source>
    </source>
</evidence>
<evidence type="ECO:0000269" key="19">
    <source>
    </source>
</evidence>
<evidence type="ECO:0000269" key="20">
    <source>
    </source>
</evidence>
<evidence type="ECO:0000269" key="21">
    <source>
    </source>
</evidence>
<evidence type="ECO:0000269" key="22">
    <source>
    </source>
</evidence>
<evidence type="ECO:0000269" key="23">
    <source>
    </source>
</evidence>
<evidence type="ECO:0000269" key="24">
    <source>
    </source>
</evidence>
<evidence type="ECO:0000269" key="25">
    <source>
    </source>
</evidence>
<evidence type="ECO:0000269" key="26">
    <source>
    </source>
</evidence>
<evidence type="ECO:0000269" key="27">
    <source>
    </source>
</evidence>
<evidence type="ECO:0000269" key="28">
    <source>
    </source>
</evidence>
<evidence type="ECO:0000269" key="29">
    <source>
    </source>
</evidence>
<evidence type="ECO:0000269" key="30">
    <source>
    </source>
</evidence>
<evidence type="ECO:0000269" key="31">
    <source>
    </source>
</evidence>
<evidence type="ECO:0000269" key="32">
    <source>
    </source>
</evidence>
<evidence type="ECO:0000269" key="33">
    <source>
    </source>
</evidence>
<evidence type="ECO:0000269" key="34">
    <source>
    </source>
</evidence>
<evidence type="ECO:0000269" key="35">
    <source>
    </source>
</evidence>
<evidence type="ECO:0000269" key="36">
    <source>
    </source>
</evidence>
<evidence type="ECO:0000269" key="37">
    <source>
    </source>
</evidence>
<evidence type="ECO:0000269" key="38">
    <source ref="9"/>
</evidence>
<evidence type="ECO:0000303" key="39">
    <source>
    </source>
</evidence>
<evidence type="ECO:0000303" key="40">
    <source>
    </source>
</evidence>
<evidence type="ECO:0000303" key="41">
    <source ref="2"/>
</evidence>
<evidence type="ECO:0000303" key="42">
    <source ref="5"/>
</evidence>
<evidence type="ECO:0000305" key="43"/>
<evidence type="ECO:0000305" key="44">
    <source>
    </source>
</evidence>
<evidence type="ECO:0007744" key="45">
    <source>
        <dbReference type="PDB" id="4PBY"/>
    </source>
</evidence>
<evidence type="ECO:0007744" key="46">
    <source>
        <dbReference type="PDB" id="4PBZ"/>
    </source>
</evidence>
<evidence type="ECO:0007744" key="47">
    <source>
        <dbReference type="PDB" id="4PC0"/>
    </source>
</evidence>
<evidence type="ECO:0007744" key="48">
    <source>
        <dbReference type="PDB" id="5WAI"/>
    </source>
</evidence>
<evidence type="ECO:0007744" key="49">
    <source>
        <dbReference type="PDB" id="5WAK"/>
    </source>
</evidence>
<evidence type="ECO:0007744" key="50">
    <source>
        <dbReference type="PDB" id="5XXQ"/>
    </source>
</evidence>
<evidence type="ECO:0007744" key="51">
    <source>
        <dbReference type="PDB" id="6NQ3"/>
    </source>
</evidence>
<evidence type="ECO:0007744" key="52">
    <source>
        <dbReference type="PDB" id="8TX8"/>
    </source>
</evidence>
<evidence type="ECO:0007744" key="53">
    <source>
    </source>
</evidence>
<evidence type="ECO:0007744" key="54">
    <source>
    </source>
</evidence>
<evidence type="ECO:0007744" key="55">
    <source>
    </source>
</evidence>
<evidence type="ECO:0007744" key="56">
    <source>
    </source>
</evidence>
<evidence type="ECO:0007744" key="57">
    <source>
    </source>
</evidence>
<evidence type="ECO:0007744" key="58">
    <source>
    </source>
</evidence>
<evidence type="ECO:0007744" key="59">
    <source>
    </source>
</evidence>
<evidence type="ECO:0007744" key="60">
    <source>
    </source>
</evidence>
<evidence type="ECO:0007829" key="61">
    <source>
        <dbReference type="PDB" id="2XU7"/>
    </source>
</evidence>
<evidence type="ECO:0007829" key="62">
    <source>
        <dbReference type="PDB" id="4PC0"/>
    </source>
</evidence>
<evidence type="ECO:0007829" key="63">
    <source>
        <dbReference type="PDB" id="4R7A"/>
    </source>
</evidence>
<evidence type="ECO:0007829" key="64">
    <source>
        <dbReference type="PDB" id="5FXY"/>
    </source>
</evidence>
<evidence type="ECO:0007829" key="65">
    <source>
        <dbReference type="PDB" id="5XXQ"/>
    </source>
</evidence>
<evidence type="ECO:0007829" key="66">
    <source>
        <dbReference type="PDB" id="5Y1U"/>
    </source>
</evidence>
<evidence type="ECO:0007829" key="67">
    <source>
        <dbReference type="PDB" id="6G16"/>
    </source>
</evidence>
<evidence type="ECO:0007829" key="68">
    <source>
        <dbReference type="PDB" id="6WKR"/>
    </source>
</evidence>
<evidence type="ECO:0007829" key="69">
    <source>
        <dbReference type="PDB" id="6ZRD"/>
    </source>
</evidence>
<evidence type="ECO:0007829" key="70">
    <source>
        <dbReference type="PDB" id="7M40"/>
    </source>
</evidence>
<evidence type="ECO:0007829" key="71">
    <source>
        <dbReference type="PDB" id="7R1D"/>
    </source>
</evidence>
<evidence type="ECO:0007829" key="72">
    <source>
        <dbReference type="PDB" id="8IQG"/>
    </source>
</evidence>
<evidence type="ECO:0007829" key="73">
    <source>
        <dbReference type="PDB" id="9C8U"/>
    </source>
</evidence>
<reference key="1">
    <citation type="journal article" date="1993" name="Nature">
        <title>A retinoblastoma-binding protein related to a negative regulator of Ras in yeast.</title>
        <authorList>
            <person name="Qian Y.-W."/>
            <person name="Wang Y.-C.J."/>
            <person name="Hollingsworth R.E. Jr."/>
            <person name="Jones D."/>
            <person name="Ling N."/>
            <person name="Lee E.Y.-H.P."/>
        </authorList>
    </citation>
    <scope>NUCLEOTIDE SEQUENCE [MRNA] (ISOFORM 1)</scope>
    <scope>PROTEIN SEQUENCE OF 134-158 AND 254-271</scope>
</reference>
<reference key="2">
    <citation type="submission" date="1993-05" db="EMBL/GenBank/DDBJ databases">
        <title>Molecular cloning and expression of two novel human cDNAs encoding proteins containing WD-40 repeats and sharing similarity to yeast MSI1 a negative regulation of the RAS-cAMP pathway.</title>
        <authorList>
            <person name="Nielsen M.S."/>
            <person name="Rasmussen H.H."/>
            <person name="Celis J.E."/>
            <person name="Leffers H."/>
        </authorList>
    </citation>
    <scope>NUCLEOTIDE SEQUENCE [MRNA] (ISOFORM 3)</scope>
</reference>
<reference key="3">
    <citation type="submission" date="2003-05" db="EMBL/GenBank/DDBJ databases">
        <title>Cloning of human full-length CDSs in BD Creator(TM) system donor vector.</title>
        <authorList>
            <person name="Kalnine N."/>
            <person name="Chen X."/>
            <person name="Rolfs A."/>
            <person name="Halleck A."/>
            <person name="Hines L."/>
            <person name="Eisenstein S."/>
            <person name="Koundinya M."/>
            <person name="Raphael J."/>
            <person name="Moreira D."/>
            <person name="Kelley T."/>
            <person name="LaBaer J."/>
            <person name="Lin Y."/>
            <person name="Phelan M."/>
            <person name="Farmer A."/>
        </authorList>
    </citation>
    <scope>NUCLEOTIDE SEQUENCE [LARGE SCALE MRNA] (ISOFORM 1)</scope>
</reference>
<reference key="4">
    <citation type="journal article" date="2004" name="Nat. Genet.">
        <title>Complete sequencing and characterization of 21,243 full-length human cDNAs.</title>
        <authorList>
            <person name="Ota T."/>
            <person name="Suzuki Y."/>
            <person name="Nishikawa T."/>
            <person name="Otsuki T."/>
            <person name="Sugiyama T."/>
            <person name="Irie R."/>
            <person name="Wakamatsu A."/>
            <person name="Hayashi K."/>
            <person name="Sato H."/>
            <person name="Nagai K."/>
            <person name="Kimura K."/>
            <person name="Makita H."/>
            <person name="Sekine M."/>
            <person name="Obayashi M."/>
            <person name="Nishi T."/>
            <person name="Shibahara T."/>
            <person name="Tanaka T."/>
            <person name="Ishii S."/>
            <person name="Yamamoto J."/>
            <person name="Saito K."/>
            <person name="Kawai Y."/>
            <person name="Isono Y."/>
            <person name="Nakamura Y."/>
            <person name="Nagahari K."/>
            <person name="Murakami K."/>
            <person name="Yasuda T."/>
            <person name="Iwayanagi T."/>
            <person name="Wagatsuma M."/>
            <person name="Shiratori A."/>
            <person name="Sudo H."/>
            <person name="Hosoiri T."/>
            <person name="Kaku Y."/>
            <person name="Kodaira H."/>
            <person name="Kondo H."/>
            <person name="Sugawara M."/>
            <person name="Takahashi M."/>
            <person name="Kanda K."/>
            <person name="Yokoi T."/>
            <person name="Furuya T."/>
            <person name="Kikkawa E."/>
            <person name="Omura Y."/>
            <person name="Abe K."/>
            <person name="Kamihara K."/>
            <person name="Katsuta N."/>
            <person name="Sato K."/>
            <person name="Tanikawa M."/>
            <person name="Yamazaki M."/>
            <person name="Ninomiya K."/>
            <person name="Ishibashi T."/>
            <person name="Yamashita H."/>
            <person name="Murakawa K."/>
            <person name="Fujimori K."/>
            <person name="Tanai H."/>
            <person name="Kimata M."/>
            <person name="Watanabe M."/>
            <person name="Hiraoka S."/>
            <person name="Chiba Y."/>
            <person name="Ishida S."/>
            <person name="Ono Y."/>
            <person name="Takiguchi S."/>
            <person name="Watanabe S."/>
            <person name="Yosida M."/>
            <person name="Hotuta T."/>
            <person name="Kusano J."/>
            <person name="Kanehori K."/>
            <person name="Takahashi-Fujii A."/>
            <person name="Hara H."/>
            <person name="Tanase T.-O."/>
            <person name="Nomura Y."/>
            <person name="Togiya S."/>
            <person name="Komai F."/>
            <person name="Hara R."/>
            <person name="Takeuchi K."/>
            <person name="Arita M."/>
            <person name="Imose N."/>
            <person name="Musashino K."/>
            <person name="Yuuki H."/>
            <person name="Oshima A."/>
            <person name="Sasaki N."/>
            <person name="Aotsuka S."/>
            <person name="Yoshikawa Y."/>
            <person name="Matsunawa H."/>
            <person name="Ichihara T."/>
            <person name="Shiohata N."/>
            <person name="Sano S."/>
            <person name="Moriya S."/>
            <person name="Momiyama H."/>
            <person name="Satoh N."/>
            <person name="Takami S."/>
            <person name="Terashima Y."/>
            <person name="Suzuki O."/>
            <person name="Nakagawa S."/>
            <person name="Senoh A."/>
            <person name="Mizoguchi H."/>
            <person name="Goto Y."/>
            <person name="Shimizu F."/>
            <person name="Wakebe H."/>
            <person name="Hishigaki H."/>
            <person name="Watanabe T."/>
            <person name="Sugiyama A."/>
            <person name="Takemoto M."/>
            <person name="Kawakami B."/>
            <person name="Yamazaki M."/>
            <person name="Watanabe K."/>
            <person name="Kumagai A."/>
            <person name="Itakura S."/>
            <person name="Fukuzumi Y."/>
            <person name="Fujimori Y."/>
            <person name="Komiyama M."/>
            <person name="Tashiro H."/>
            <person name="Tanigami A."/>
            <person name="Fujiwara T."/>
            <person name="Ono T."/>
            <person name="Yamada K."/>
            <person name="Fujii Y."/>
            <person name="Ozaki K."/>
            <person name="Hirao M."/>
            <person name="Ohmori Y."/>
            <person name="Kawabata A."/>
            <person name="Hikiji T."/>
            <person name="Kobatake N."/>
            <person name="Inagaki H."/>
            <person name="Ikema Y."/>
            <person name="Okamoto S."/>
            <person name="Okitani R."/>
            <person name="Kawakami T."/>
            <person name="Noguchi S."/>
            <person name="Itoh T."/>
            <person name="Shigeta K."/>
            <person name="Senba T."/>
            <person name="Matsumura K."/>
            <person name="Nakajima Y."/>
            <person name="Mizuno T."/>
            <person name="Morinaga M."/>
            <person name="Sasaki M."/>
            <person name="Togashi T."/>
            <person name="Oyama M."/>
            <person name="Hata H."/>
            <person name="Watanabe M."/>
            <person name="Komatsu T."/>
            <person name="Mizushima-Sugano J."/>
            <person name="Satoh T."/>
            <person name="Shirai Y."/>
            <person name="Takahashi Y."/>
            <person name="Nakagawa K."/>
            <person name="Okumura K."/>
            <person name="Nagase T."/>
            <person name="Nomura N."/>
            <person name="Kikuchi H."/>
            <person name="Masuho Y."/>
            <person name="Yamashita R."/>
            <person name="Nakai K."/>
            <person name="Yada T."/>
            <person name="Nakamura Y."/>
            <person name="Ohara O."/>
            <person name="Isogai T."/>
            <person name="Sugano S."/>
        </authorList>
    </citation>
    <scope>NUCLEOTIDE SEQUENCE [LARGE SCALE MRNA] (ISOFORMS 1 AND 4)</scope>
    <source>
        <tissue>Brain</tissue>
    </source>
</reference>
<reference key="5">
    <citation type="submission" date="2005-04" db="EMBL/GenBank/DDBJ databases">
        <authorList>
            <person name="Suzuki Y."/>
            <person name="Sugano S."/>
            <person name="Totoki Y."/>
            <person name="Toyoda A."/>
            <person name="Takeda T."/>
            <person name="Sakaki Y."/>
            <person name="Tanaka A."/>
            <person name="Yokoyama S."/>
        </authorList>
    </citation>
    <scope>NUCLEOTIDE SEQUENCE [LARGE SCALE MRNA] (ISOFORM 2)</scope>
    <source>
        <tissue>Liver</tissue>
    </source>
</reference>
<reference key="6">
    <citation type="journal article" date="2006" name="Nature">
        <title>The DNA sequence and biological annotation of human chromosome 1.</title>
        <authorList>
            <person name="Gregory S.G."/>
            <person name="Barlow K.F."/>
            <person name="McLay K.E."/>
            <person name="Kaul R."/>
            <person name="Swarbreck D."/>
            <person name="Dunham A."/>
            <person name="Scott C.E."/>
            <person name="Howe K.L."/>
            <person name="Woodfine K."/>
            <person name="Spencer C.C.A."/>
            <person name="Jones M.C."/>
            <person name="Gillson C."/>
            <person name="Searle S."/>
            <person name="Zhou Y."/>
            <person name="Kokocinski F."/>
            <person name="McDonald L."/>
            <person name="Evans R."/>
            <person name="Phillips K."/>
            <person name="Atkinson A."/>
            <person name="Cooper R."/>
            <person name="Jones C."/>
            <person name="Hall R.E."/>
            <person name="Andrews T.D."/>
            <person name="Lloyd C."/>
            <person name="Ainscough R."/>
            <person name="Almeida J.P."/>
            <person name="Ambrose K.D."/>
            <person name="Anderson F."/>
            <person name="Andrew R.W."/>
            <person name="Ashwell R.I.S."/>
            <person name="Aubin K."/>
            <person name="Babbage A.K."/>
            <person name="Bagguley C.L."/>
            <person name="Bailey J."/>
            <person name="Beasley H."/>
            <person name="Bethel G."/>
            <person name="Bird C.P."/>
            <person name="Bray-Allen S."/>
            <person name="Brown J.Y."/>
            <person name="Brown A.J."/>
            <person name="Buckley D."/>
            <person name="Burton J."/>
            <person name="Bye J."/>
            <person name="Carder C."/>
            <person name="Chapman J.C."/>
            <person name="Clark S.Y."/>
            <person name="Clarke G."/>
            <person name="Clee C."/>
            <person name="Cobley V."/>
            <person name="Collier R.E."/>
            <person name="Corby N."/>
            <person name="Coville G.J."/>
            <person name="Davies J."/>
            <person name="Deadman R."/>
            <person name="Dunn M."/>
            <person name="Earthrowl M."/>
            <person name="Ellington A.G."/>
            <person name="Errington H."/>
            <person name="Frankish A."/>
            <person name="Frankland J."/>
            <person name="French L."/>
            <person name="Garner P."/>
            <person name="Garnett J."/>
            <person name="Gay L."/>
            <person name="Ghori M.R.J."/>
            <person name="Gibson R."/>
            <person name="Gilby L.M."/>
            <person name="Gillett W."/>
            <person name="Glithero R.J."/>
            <person name="Grafham D.V."/>
            <person name="Griffiths C."/>
            <person name="Griffiths-Jones S."/>
            <person name="Grocock R."/>
            <person name="Hammond S."/>
            <person name="Harrison E.S.I."/>
            <person name="Hart E."/>
            <person name="Haugen E."/>
            <person name="Heath P.D."/>
            <person name="Holmes S."/>
            <person name="Holt K."/>
            <person name="Howden P.J."/>
            <person name="Hunt A.R."/>
            <person name="Hunt S.E."/>
            <person name="Hunter G."/>
            <person name="Isherwood J."/>
            <person name="James R."/>
            <person name="Johnson C."/>
            <person name="Johnson D."/>
            <person name="Joy A."/>
            <person name="Kay M."/>
            <person name="Kershaw J.K."/>
            <person name="Kibukawa M."/>
            <person name="Kimberley A.M."/>
            <person name="King A."/>
            <person name="Knights A.J."/>
            <person name="Lad H."/>
            <person name="Laird G."/>
            <person name="Lawlor S."/>
            <person name="Leongamornlert D.A."/>
            <person name="Lloyd D.M."/>
            <person name="Loveland J."/>
            <person name="Lovell J."/>
            <person name="Lush M.J."/>
            <person name="Lyne R."/>
            <person name="Martin S."/>
            <person name="Mashreghi-Mohammadi M."/>
            <person name="Matthews L."/>
            <person name="Matthews N.S.W."/>
            <person name="McLaren S."/>
            <person name="Milne S."/>
            <person name="Mistry S."/>
            <person name="Moore M.J.F."/>
            <person name="Nickerson T."/>
            <person name="O'Dell C.N."/>
            <person name="Oliver K."/>
            <person name="Palmeiri A."/>
            <person name="Palmer S.A."/>
            <person name="Parker A."/>
            <person name="Patel D."/>
            <person name="Pearce A.V."/>
            <person name="Peck A.I."/>
            <person name="Pelan S."/>
            <person name="Phelps K."/>
            <person name="Phillimore B.J."/>
            <person name="Plumb R."/>
            <person name="Rajan J."/>
            <person name="Raymond C."/>
            <person name="Rouse G."/>
            <person name="Saenphimmachak C."/>
            <person name="Sehra H.K."/>
            <person name="Sheridan E."/>
            <person name="Shownkeen R."/>
            <person name="Sims S."/>
            <person name="Skuce C.D."/>
            <person name="Smith M."/>
            <person name="Steward C."/>
            <person name="Subramanian S."/>
            <person name="Sycamore N."/>
            <person name="Tracey A."/>
            <person name="Tromans A."/>
            <person name="Van Helmond Z."/>
            <person name="Wall M."/>
            <person name="Wallis J.M."/>
            <person name="White S."/>
            <person name="Whitehead S.L."/>
            <person name="Wilkinson J.E."/>
            <person name="Willey D.L."/>
            <person name="Williams H."/>
            <person name="Wilming L."/>
            <person name="Wray P.W."/>
            <person name="Wu Z."/>
            <person name="Coulson A."/>
            <person name="Vaudin M."/>
            <person name="Sulston J.E."/>
            <person name="Durbin R.M."/>
            <person name="Hubbard T."/>
            <person name="Wooster R."/>
            <person name="Dunham I."/>
            <person name="Carter N.P."/>
            <person name="McVean G."/>
            <person name="Ross M.T."/>
            <person name="Harrow J."/>
            <person name="Olson M.V."/>
            <person name="Beck S."/>
            <person name="Rogers J."/>
            <person name="Bentley D.R."/>
        </authorList>
    </citation>
    <scope>NUCLEOTIDE SEQUENCE [LARGE SCALE GENOMIC DNA]</scope>
</reference>
<reference key="7">
    <citation type="submission" date="2005-09" db="EMBL/GenBank/DDBJ databases">
        <authorList>
            <person name="Mural R.J."/>
            <person name="Istrail S."/>
            <person name="Sutton G.G."/>
            <person name="Florea L."/>
            <person name="Halpern A.L."/>
            <person name="Mobarry C.M."/>
            <person name="Lippert R."/>
            <person name="Walenz B."/>
            <person name="Shatkay H."/>
            <person name="Dew I."/>
            <person name="Miller J.R."/>
            <person name="Flanigan M.J."/>
            <person name="Edwards N.J."/>
            <person name="Bolanos R."/>
            <person name="Fasulo D."/>
            <person name="Halldorsson B.V."/>
            <person name="Hannenhalli S."/>
            <person name="Turner R."/>
            <person name="Yooseph S."/>
            <person name="Lu F."/>
            <person name="Nusskern D.R."/>
            <person name="Shue B.C."/>
            <person name="Zheng X.H."/>
            <person name="Zhong F."/>
            <person name="Delcher A.L."/>
            <person name="Huson D.H."/>
            <person name="Kravitz S.A."/>
            <person name="Mouchard L."/>
            <person name="Reinert K."/>
            <person name="Remington K.A."/>
            <person name="Clark A.G."/>
            <person name="Waterman M.S."/>
            <person name="Eichler E.E."/>
            <person name="Adams M.D."/>
            <person name="Hunkapiller M.W."/>
            <person name="Myers E.W."/>
            <person name="Venter J.C."/>
        </authorList>
    </citation>
    <scope>NUCLEOTIDE SEQUENCE [LARGE SCALE GENOMIC DNA]</scope>
</reference>
<reference key="8">
    <citation type="journal article" date="2004" name="Genome Res.">
        <title>The status, quality, and expansion of the NIH full-length cDNA project: the Mammalian Gene Collection (MGC).</title>
        <authorList>
            <consortium name="The MGC Project Team"/>
        </authorList>
    </citation>
    <scope>NUCLEOTIDE SEQUENCE [LARGE SCALE MRNA] (ISOFORM 1)</scope>
    <source>
        <tissue>Bone marrow</tissue>
        <tissue>Brain</tissue>
        <tissue>Eye</tissue>
        <tissue>Uterus</tissue>
    </source>
</reference>
<reference key="9">
    <citation type="submission" date="2005-02" db="UniProtKB">
        <authorList>
            <person name="Bienvenut W.V."/>
        </authorList>
    </citation>
    <scope>PROTEIN SEQUENCE OF 2-15 AND 297-304</scope>
    <scope>CLEAVAGE OF INITIATOR METHIONINE</scope>
    <scope>ACETYLATION AT ALA-2</scope>
    <scope>IDENTIFICATION BY MASS SPECTROMETRY</scope>
    <source>
        <tissue>B-cell lymphoma</tissue>
    </source>
</reference>
<reference key="10">
    <citation type="journal article" date="1990" name="Electrophoresis">
        <title>Two-dimensional gel electrophoresis, protein electroblotting and microsequencing: a direct link between proteins and genes.</title>
        <authorList>
            <person name="Bauw G."/>
            <person name="Rasmussen H.H."/>
            <person name="van den Bulcke M."/>
            <person name="van Damme J."/>
            <person name="Puype M."/>
            <person name="Gesser B."/>
            <person name="Celis J.E."/>
            <person name="Vandekerckhove J."/>
        </authorList>
    </citation>
    <scope>PROTEIN SEQUENCE OF 60-65; 144-160 AND 221-240</scope>
    <source>
        <tissue>Keratinocyte</tissue>
    </source>
</reference>
<reference key="11">
    <citation type="journal article" date="1992" name="Electrophoresis">
        <title>Microsequences of 145 proteins recorded in the two-dimensional gel protein database of normal human epidermal keratinocytes.</title>
        <authorList>
            <person name="Rasmussen H.H."/>
            <person name="van Damme J."/>
            <person name="Puype M."/>
            <person name="Gesser B."/>
            <person name="Celis J.E."/>
            <person name="Vandekerckhove J."/>
        </authorList>
    </citation>
    <scope>PROTEIN SEQUENCE OF 60-65; 144-160 AND 221-240</scope>
    <source>
        <tissue>Keratinocyte</tissue>
    </source>
</reference>
<reference key="12">
    <citation type="journal article" date="1996" name="Cell">
        <title>Nucleosome assembly by a complex of CAF-1 and acetylated histones H3/H4.</title>
        <authorList>
            <person name="Verreault A."/>
            <person name="Kaufman P.D."/>
            <person name="Kobayashi R."/>
            <person name="Stillman B."/>
        </authorList>
    </citation>
    <scope>PARTIAL PROTEIN SEQUENCE</scope>
    <scope>IDENTIFICATION IN THE CAF-1 COMPLEX</scope>
    <scope>INTERACTION WITH HISTONE H4</scope>
    <scope>SUBCELLULAR LOCATION</scope>
</reference>
<reference key="13">
    <citation type="journal article" date="1997" name="Cell">
        <title>Histone deacetylases and SAP18, a novel polypeptide, are components of a human Sin3 complex.</title>
        <authorList>
            <person name="Zhang Y."/>
            <person name="Iratni R."/>
            <person name="Erdjument-Bromage H."/>
            <person name="Tempst P."/>
            <person name="Reinberg D."/>
        </authorList>
    </citation>
    <scope>PARTIAL PROTEIN SEQUENCE</scope>
    <scope>IDENTIFICATION IN THE SIN3 HDAC COMPLEX</scope>
</reference>
<reference key="14">
    <citation type="journal article" date="1995" name="J. Biol. Chem.">
        <title>Dual retinoblastoma-binding proteins with properties related to a negative regulator of ras in yeast.</title>
        <authorList>
            <person name="Qian Y.-W."/>
            <person name="Lee E.Y.-H.P."/>
        </authorList>
    </citation>
    <scope>INTERACTION WITH RB1</scope>
</reference>
<reference key="15">
    <citation type="journal article" date="1996" name="Science">
        <title>A mammalian histone deacetylase related to the yeast transcriptional regulator Rpd3p.</title>
        <authorList>
            <person name="Taunton J."/>
            <person name="Hassig C.A."/>
            <person name="Schreiber S.L."/>
        </authorList>
    </citation>
    <scope>INTERACTION WITH HDAC1</scope>
</reference>
<reference key="16">
    <citation type="journal article" date="1998" name="Cell">
        <title>The dermatomyositis-specific autoantigen Mi2 is a component of a complex containing histone deacetylase and nucleosome remodeling activities.</title>
        <authorList>
            <person name="Zhang Y."/>
            <person name="LeRoy G."/>
            <person name="Seelig H.-P."/>
            <person name="Lane W.S."/>
            <person name="Reinberg D."/>
        </authorList>
    </citation>
    <scope>IDENTIFICATION IN THE NURD COMPLEX</scope>
</reference>
<reference key="17">
    <citation type="journal article" date="1998" name="Curr. Biol.">
        <title>Nucleosomal DNA regulates the core-histone-binding subunit of the human Hat1 acetyltransferase.</title>
        <authorList>
            <person name="Verreault A."/>
            <person name="Kaufman P.D."/>
            <person name="Kobayashi R."/>
            <person name="Stillman B."/>
        </authorList>
    </citation>
    <scope>INTERACTION WITH HISTONE H4</scope>
</reference>
<reference key="18">
    <citation type="journal article" date="1998" name="Mol. Cell">
        <title>SAP30, a novel protein conserved between human and yeast, is a component of a histone deacetylase complex.</title>
        <authorList>
            <person name="Zhang Y."/>
            <person name="Sun Z.-W."/>
            <person name="Iratni R."/>
            <person name="Erdjument-Bromage H."/>
            <person name="Tempst P."/>
            <person name="Hampsey M."/>
            <person name="Reinberg D."/>
        </authorList>
    </citation>
    <scope>IDENTIFICATION IN THE SIN3 HDAC COMPLEX</scope>
</reference>
<reference key="19">
    <citation type="journal article" date="1998" name="Proc. Natl. Acad. Sci. U.S.A.">
        <title>A role for histone deacetylase activity in HDAC1-mediated transcriptional repression.</title>
        <authorList>
            <person name="Hassig C.A."/>
            <person name="Tong J.K."/>
            <person name="Fleischer T.C."/>
            <person name="Owa T."/>
            <person name="Grable P.G."/>
            <person name="Ayer D.E."/>
            <person name="Schreiber S.L."/>
        </authorList>
    </citation>
    <scope>INTERACTION WITH HDAC1</scope>
</reference>
<reference key="20">
    <citation type="journal article" date="1999" name="Genes Dev.">
        <title>Analysis of the NuRD subunits reveals a histone deacetylase core complex and a connection with DNA methylation.</title>
        <authorList>
            <person name="Zhang Y."/>
            <person name="Ng H.-H."/>
            <person name="Erdjument-Bromage H."/>
            <person name="Tempst P."/>
            <person name="Bird A."/>
            <person name="Reinberg D."/>
        </authorList>
    </citation>
    <scope>IDENTIFICATION IN THE NURD COMPLEX</scope>
</reference>
<reference key="21">
    <citation type="journal article" date="1999" name="Proc. Natl. Acad. Sci. U.S.A.">
        <title>BRCA1 interacts with components of the histone deacetylase complex.</title>
        <authorList>
            <person name="Yarden R.I."/>
            <person name="Brody L.C."/>
        </authorList>
    </citation>
    <scope>INTERACTION WITH BRCA1</scope>
    <scope>SUBCELLULAR LOCATION</scope>
</reference>
<reference key="22">
    <citation type="journal article" date="2000" name="J. Biol. Chem.">
        <title>RbAp48 belongs to the histone deacetylase complex that associates with the retinoblastoma protein.</title>
        <authorList>
            <person name="Nicolas E."/>
            <person name="Morales V."/>
            <person name="Magnaghi-Jaulin L."/>
            <person name="Harel-Bellan A."/>
            <person name="Richard-Foy H."/>
            <person name="Trouche D."/>
        </authorList>
    </citation>
    <scope>INTERACTION WITH HDAC1 AND RB1</scope>
</reference>
<reference key="23">
    <citation type="journal article" date="2000" name="Mol. Cell. Biol.">
        <title>Histone binding protein RbAp48 interacts with a complex of CREB binding protein and phosphorylated CREB.</title>
        <authorList>
            <person name="Zhang Q."/>
            <person name="Vo N."/>
            <person name="Goodman R.H."/>
        </authorList>
    </citation>
    <scope>FUNCTION</scope>
    <scope>INTERACTION WITH CREBBP</scope>
    <scope>SUBCELLULAR LOCATION</scope>
</reference>
<reference key="24">
    <citation type="journal article" date="2001" name="Genes Dev.">
        <title>Sharp, an inducible cofactor that integrates nuclear receptor repression and activation.</title>
        <authorList>
            <person name="Shi Y."/>
            <person name="Downes M."/>
            <person name="Xie W."/>
            <person name="Kao H.-Y."/>
            <person name="Ordentlich P."/>
            <person name="Tsai C.-C."/>
            <person name="Hon M."/>
            <person name="Evans R.M."/>
        </authorList>
    </citation>
    <scope>INTERACTION WITH SPEN</scope>
</reference>
<reference key="25">
    <citation type="journal article" date="2001" name="J. Biol. Chem.">
        <title>Stable histone deacetylase complexes distinguished by the presence of SANT domain proteins CoREST/kiaa0071 and Mta-L1.</title>
        <authorList>
            <person name="Humphrey G.W."/>
            <person name="Wang Y."/>
            <person name="Russanova V.R."/>
            <person name="Hirai T."/>
            <person name="Qin J."/>
            <person name="Nakatani Y."/>
            <person name="Howard B.H."/>
        </authorList>
    </citation>
    <scope>IDENTIFICATION IN THE NURD COMPLEX</scope>
</reference>
<reference key="26">
    <citation type="journal article" date="2001" name="J. Biol. Chem.">
        <title>Differential association of products of alternative transcripts of the candidate tumor suppressor ING1 with the mSin3/HDAC1 transcriptional corepressor complex.</title>
        <authorList>
            <person name="Skowyra D."/>
            <person name="Zeremski M."/>
            <person name="Neznanov N."/>
            <person name="Li M."/>
            <person name="Choi Y."/>
            <person name="Uesugi M."/>
            <person name="Hauser C.A."/>
            <person name="Gu W."/>
            <person name="Gudkov A.V."/>
            <person name="Qin J."/>
        </authorList>
    </citation>
    <scope>IDENTIFICATION IN A SIN3 HDAC COMPLEX</scope>
</reference>
<reference key="27">
    <citation type="journal article" date="2002" name="Genes Dev.">
        <title>Histone methyltransferase activity associated with a human multiprotein complex containing the Enhancer of Zeste protein.</title>
        <authorList>
            <person name="Kuzmichev A."/>
            <person name="Nishioka K."/>
            <person name="Erdjument-Bromage H."/>
            <person name="Tempst P."/>
            <person name="Reinberg D."/>
        </authorList>
    </citation>
    <scope>IDENTIFICATION IN THE PRC2/EZH2 COMPLEX WITH EED; EZH2; RBBP7 AND SUZ12</scope>
    <scope>TRANSIENT INTERACTION WITH HDAC1</scope>
    <scope>METHYLTRANSFERASE ACTIVITY OF THE COMPLEX</scope>
</reference>
<reference key="28">
    <citation type="journal article" date="2002" name="Mol. Cell. Biol.">
        <title>Role of the Sin3-histone deacetylase complex in growth regulation by the candidate tumor suppressor p33(ING1).</title>
        <authorList>
            <person name="Kuzmichev A."/>
            <person name="Zhang Y."/>
            <person name="Erdjument-Bromage H."/>
            <person name="Tempst P."/>
            <person name="Reinberg D."/>
        </authorList>
    </citation>
    <scope>IDENTIFICATION IN MULTIPLE SIN3 HDAC COMPLEXES</scope>
</reference>
<reference key="29">
    <citation type="journal article" date="2002" name="Nature">
        <title>A chromatin remodelling complex that loads cohesin onto human chromosomes.</title>
        <authorList>
            <person name="Hakimi M.-A."/>
            <person name="Bochar D.A."/>
            <person name="Schmiesing J.A."/>
            <person name="Dong Y."/>
            <person name="Barak O.G."/>
            <person name="Speicher D.W."/>
            <person name="Yokomori K."/>
            <person name="Shiekhattar R."/>
        </authorList>
    </citation>
    <scope>INTERACTION WITH SMARCA5</scope>
</reference>
<reference key="30">
    <citation type="journal article" date="2002" name="Science">
        <title>Role of histone H3 lysine 27 methylation in Polycomb-group silencing.</title>
        <authorList>
            <person name="Cao R."/>
            <person name="Wang L."/>
            <person name="Wang H."/>
            <person name="Xia L."/>
            <person name="Erdjument-Bromage H."/>
            <person name="Tempst P."/>
            <person name="Jones R.S."/>
            <person name="Zhang Y."/>
        </authorList>
    </citation>
    <scope>IDENTIFICATION IN THE PRC2/EZH2 COMPLEX WITH AEBP2; EED; EZH2 AND SUZ12</scope>
    <scope>METHYLTRANSFERASE ACTIVITY OF THE COMPLEX</scope>
</reference>
<reference key="31">
    <citation type="journal article" date="2003" name="EMBO J.">
        <title>Isolation of human NURF: a regulator of Engrailed gene expression.</title>
        <authorList>
            <person name="Barak O."/>
            <person name="Lazzaro M.A."/>
            <person name="Lane W.S."/>
            <person name="Speicher D.W."/>
            <person name="Picketts D.J."/>
            <person name="Shiekhattar R."/>
        </authorList>
    </citation>
    <scope>IDENTIFICATION IN THE NURF-1 COMPLEX</scope>
    <scope>INTERACTION WITH SMARCA1</scope>
    <scope>SUBCELLULAR LOCATION</scope>
    <scope>IDENTIFICATION BY MASS SPECTROMETRY</scope>
</reference>
<reference key="32">
    <citation type="journal article" date="2003" name="J. Biol. Chem.">
        <title>The metastasis-associated proteins 1 and 2 form distinct protein complexes with histone deacetylase activity.</title>
        <authorList>
            <person name="Yao Y.-L."/>
            <person name="Yang W.-M."/>
        </authorList>
    </citation>
    <scope>INTERACTION WITH MTA1</scope>
</reference>
<reference key="33">
    <citation type="journal article" date="2004" name="J. Biol. Chem.">
        <title>A tissue-specific, naturally occurring human SNF2L variant inactivates chromatin remodeling.</title>
        <authorList>
            <person name="Barak O."/>
            <person name="Lazzaro M.A."/>
            <person name="Cooch N.S."/>
            <person name="Picketts D.J."/>
            <person name="Shiekhattar R."/>
        </authorList>
    </citation>
    <scope>IDENTIFICATION IN COMPLEXES WITH SMARCA1</scope>
    <scope>INTERACTION WITH SMARCA1</scope>
</reference>
<reference key="34">
    <citation type="journal article" date="2004" name="J. Biol. Chem.">
        <title>MBD3L1 is a transcriptional repressor that interacts with methyl-CpG-binding protein 2 (MBD2) and components of the NuRD complex.</title>
        <authorList>
            <person name="Jiang C.-L."/>
            <person name="Jin S.-G."/>
            <person name="Pfeifer G.P."/>
        </authorList>
    </citation>
    <scope>INTERACTION WITH MBD3L1</scope>
</reference>
<reference key="35">
    <citation type="journal article" date="2005" name="J. Biol. Chem.">
        <title>MBD3L2 interacts with MBD3 and components of the NuRD complex and can oppose MBD2-MeCP1-mediated methylation silencing.</title>
        <authorList>
            <person name="Jin S.-G."/>
            <person name="Jiang C.-L."/>
            <person name="Rauch T."/>
            <person name="Li H."/>
            <person name="Pfeifer G.P."/>
        </authorList>
    </citation>
    <scope>INTERACTION WITH MBD3L2</scope>
</reference>
<reference key="36">
    <citation type="journal article" date="2006" name="Mol. Cell. Biol.">
        <title>MBD2/NuRD and MBD3/NuRD, two distinct complexes with different biochemical and functional properties.</title>
        <authorList>
            <person name="Le Guezennec X."/>
            <person name="Vermeulen M."/>
            <person name="Brinkman A.B."/>
            <person name="Hoeijmakers W.A."/>
            <person name="Cohen A."/>
            <person name="Lasonder E."/>
            <person name="Stunnenberg H.G."/>
        </authorList>
    </citation>
    <scope>FUNCTION</scope>
    <scope>IDENTIFICATION IN THE NURD COMPLEX</scope>
    <scope>IDENTIFICATION BY MASS SPECTROMETRY</scope>
</reference>
<reference key="37">
    <citation type="journal article" date="2007" name="Cell Cycle">
        <title>LINC, a human complex that is related to pRB-containing complexes in invertebrates regulates the expression of G2/M genes.</title>
        <authorList>
            <person name="Schmit F."/>
            <person name="Korenjak M."/>
            <person name="Mannefeld M."/>
            <person name="Schmitt K."/>
            <person name="Franke C."/>
            <person name="von Eyss B."/>
            <person name="Gagrica S."/>
            <person name="Haenel F."/>
            <person name="Brehm A."/>
            <person name="Gaubatz S."/>
        </authorList>
    </citation>
    <scope>IDENTIFICATION IN THE DREAM COMPLEX</scope>
</reference>
<reference key="38">
    <citation type="journal article" date="2007" name="Mol. Cell">
        <title>Evolutionarily conserved multisubunit RBL2/p130 and E2F4 protein complex represses human cell cycle-dependent genes in quiescence.</title>
        <authorList>
            <person name="Litovchick L."/>
            <person name="Sadasivam S."/>
            <person name="Florens L."/>
            <person name="Zhu X."/>
            <person name="Swanson S.K."/>
            <person name="Velmurugan S."/>
            <person name="Chen R."/>
            <person name="Washburn M.P."/>
            <person name="Liu X.S."/>
            <person name="DeCaprio J.A."/>
        </authorList>
    </citation>
    <scope>IDENTIFICATION IN THE DREAM COMPLEX</scope>
</reference>
<reference key="39">
    <citation type="journal article" date="2009" name="Anal. Chem.">
        <title>Lys-N and trypsin cover complementary parts of the phosphoproteome in a refined SCX-based approach.</title>
        <authorList>
            <person name="Gauci S."/>
            <person name="Helbig A.O."/>
            <person name="Slijper M."/>
            <person name="Krijgsveld J."/>
            <person name="Heck A.J."/>
            <person name="Mohammed S."/>
        </authorList>
    </citation>
    <scope>ACETYLATION [LARGE SCALE ANALYSIS] AT ALA-2</scope>
    <scope>CLEAVAGE OF INITIATOR METHIONINE [LARGE SCALE ANALYSIS]</scope>
    <scope>IDENTIFICATION BY MASS SPECTROMETRY [LARGE SCALE ANALYSIS]</scope>
</reference>
<reference key="40">
    <citation type="journal article" date="2009" name="Sci. Signal.">
        <title>Quantitative phosphoproteomic analysis of T cell receptor signaling reveals system-wide modulation of protein-protein interactions.</title>
        <authorList>
            <person name="Mayya V."/>
            <person name="Lundgren D.H."/>
            <person name="Hwang S.-I."/>
            <person name="Rezaul K."/>
            <person name="Wu L."/>
            <person name="Eng J.K."/>
            <person name="Rodionov V."/>
            <person name="Han D.K."/>
        </authorList>
    </citation>
    <scope>PHOSPHORYLATION [LARGE SCALE ANALYSIS] AT SER-110</scope>
    <scope>IDENTIFICATION BY MASS SPECTROMETRY [LARGE SCALE ANALYSIS]</scope>
    <source>
        <tissue>Leukemic T-cell</tissue>
    </source>
</reference>
<reference key="41">
    <citation type="journal article" date="2009" name="Science">
        <title>Lysine acetylation targets protein complexes and co-regulates major cellular functions.</title>
        <authorList>
            <person name="Choudhary C."/>
            <person name="Kumar C."/>
            <person name="Gnad F."/>
            <person name="Nielsen M.L."/>
            <person name="Rehman M."/>
            <person name="Walther T.C."/>
            <person name="Olsen J.V."/>
            <person name="Mann M."/>
        </authorList>
    </citation>
    <scope>ACETYLATION [LARGE SCALE ANALYSIS] AT LYS-4</scope>
    <scope>IDENTIFICATION BY MASS SPECTROMETRY [LARGE SCALE ANALYSIS]</scope>
</reference>
<reference key="42">
    <citation type="journal article" date="2010" name="Mol. Biosyst.">
        <title>CDK2AP1/DOC-1 is a bona fide subunit of the Mi-2/NuRD complex.</title>
        <authorList>
            <person name="Spruijt C.G."/>
            <person name="Bartels S.J."/>
            <person name="Brinkman A.B."/>
            <person name="Tjeertes J.V."/>
            <person name="Poser I."/>
            <person name="Stunnenberg H.G."/>
            <person name="Vermeulen M."/>
        </authorList>
    </citation>
    <scope>INTERACTION WITH CDK2AP1</scope>
    <scope>IDENTIFICATION BY MASS SPECTROMETRY</scope>
    <scope>SUBCELLULAR LOCATION</scope>
</reference>
<reference key="43">
    <citation type="journal article" date="2011" name="BMC Syst. Biol.">
        <title>Initial characterization of the human central proteome.</title>
        <authorList>
            <person name="Burkard T.R."/>
            <person name="Planyavsky M."/>
            <person name="Kaupe I."/>
            <person name="Breitwieser F.P."/>
            <person name="Buerckstuemmer T."/>
            <person name="Bennett K.L."/>
            <person name="Superti-Furga G."/>
            <person name="Colinge J."/>
        </authorList>
    </citation>
    <scope>IDENTIFICATION BY MASS SPECTROMETRY [LARGE SCALE ANALYSIS]</scope>
</reference>
<reference key="44">
    <citation type="journal article" date="2012" name="Mol. Cell. Proteomics">
        <title>Comparative large-scale characterisation of plant vs. mammal proteins reveals similar and idiosyncratic N-alpha acetylation features.</title>
        <authorList>
            <person name="Bienvenut W.V."/>
            <person name="Sumpton D."/>
            <person name="Martinez A."/>
            <person name="Lilla S."/>
            <person name="Espagne C."/>
            <person name="Meinnel T."/>
            <person name="Giglione C."/>
        </authorList>
    </citation>
    <scope>ACETYLATION [LARGE SCALE ANALYSIS] AT ALA-2</scope>
    <scope>CLEAVAGE OF INITIATOR METHIONINE [LARGE SCALE ANALYSIS]</scope>
    <scope>IDENTIFICATION BY MASS SPECTROMETRY [LARGE SCALE ANALYSIS]</scope>
</reference>
<reference key="45">
    <citation type="journal article" date="2012" name="Proc. Natl. Acad. Sci. U.S.A.">
        <title>N-terminal acetylome analyses and functional insights of the N-terminal acetyltransferase NatB.</title>
        <authorList>
            <person name="Van Damme P."/>
            <person name="Lasa M."/>
            <person name="Polevoda B."/>
            <person name="Gazquez C."/>
            <person name="Elosegui-Artola A."/>
            <person name="Kim D.S."/>
            <person name="De Juan-Pardo E."/>
            <person name="Demeyer K."/>
            <person name="Hole K."/>
            <person name="Larrea E."/>
            <person name="Timmerman E."/>
            <person name="Prieto J."/>
            <person name="Arnesen T."/>
            <person name="Sherman F."/>
            <person name="Gevaert K."/>
            <person name="Aldabe R."/>
        </authorList>
    </citation>
    <scope>ACETYLATION [LARGE SCALE ANALYSIS] AT ALA-2</scope>
    <scope>CLEAVAGE OF INITIATOR METHIONINE [LARGE SCALE ANALYSIS]</scope>
    <scope>IDENTIFICATION BY MASS SPECTROMETRY [LARGE SCALE ANALYSIS]</scope>
</reference>
<reference key="46">
    <citation type="journal article" date="2013" name="J. Proteome Res.">
        <title>Toward a comprehensive characterization of a human cancer cell phosphoproteome.</title>
        <authorList>
            <person name="Zhou H."/>
            <person name="Di Palma S."/>
            <person name="Preisinger C."/>
            <person name="Peng M."/>
            <person name="Polat A.N."/>
            <person name="Heck A.J."/>
            <person name="Mohammed S."/>
        </authorList>
    </citation>
    <scope>PHOSPHORYLATION [LARGE SCALE ANALYSIS] AT SER-110 AND SER-355</scope>
    <scope>IDENTIFICATION BY MASS SPECTROMETRY [LARGE SCALE ANALYSIS]</scope>
    <source>
        <tissue>Cervix carcinoma</tissue>
        <tissue>Erythroleukemia</tissue>
    </source>
</reference>
<reference key="47">
    <citation type="journal article" date="2014" name="J. Biol. Chem.">
        <title>Structural and functional insights into the human Borjeson-Forssman-Lehmann syndrome-associated protein PHF6.</title>
        <authorList>
            <person name="Liu Z."/>
            <person name="Li F."/>
            <person name="Ruan K."/>
            <person name="Zhang J."/>
            <person name="Mei Y."/>
            <person name="Wu J."/>
            <person name="Shi Y."/>
        </authorList>
    </citation>
    <scope>INTERACTION WITH PHF6</scope>
</reference>
<reference key="48">
    <citation type="journal article" date="2014" name="J. Proteomics">
        <title>An enzyme assisted RP-RPLC approach for in-depth analysis of human liver phosphoproteome.</title>
        <authorList>
            <person name="Bian Y."/>
            <person name="Song C."/>
            <person name="Cheng K."/>
            <person name="Dong M."/>
            <person name="Wang F."/>
            <person name="Huang J."/>
            <person name="Sun D."/>
            <person name="Wang L."/>
            <person name="Ye M."/>
            <person name="Zou H."/>
        </authorList>
    </citation>
    <scope>IDENTIFICATION BY MASS SPECTROMETRY [LARGE SCALE ANALYSIS]</scope>
    <source>
        <tissue>Liver</tissue>
    </source>
</reference>
<reference key="49">
    <citation type="journal article" date="2015" name="Mol. Cell. Proteomics">
        <title>System-wide analysis of SUMOylation dynamics in response to replication stress reveals novel small ubiquitin-like modified target proteins and acceptor lysines relevant for genome stability.</title>
        <authorList>
            <person name="Xiao Z."/>
            <person name="Chang J.G."/>
            <person name="Hendriks I.A."/>
            <person name="Sigurdsson J.O."/>
            <person name="Olsen J.V."/>
            <person name="Vertegaal A.C."/>
        </authorList>
    </citation>
    <scope>SUMOYLATION [LARGE SCALE ANALYSIS] AT LYS-160</scope>
    <scope>IDENTIFICATION BY MASS SPECTROMETRY [LARGE SCALE ANALYSIS]</scope>
</reference>
<reference key="50">
    <citation type="journal article" date="2015" name="PLoS ONE">
        <title>Identification of Novel Proteins Co-Purifying with Cockayne Syndrome Group B (CSB) Reveals Potential Roles for CSB in RNA Metabolism and Chromatin Dynamics.</title>
        <authorList>
            <person name="Nicolai S."/>
            <person name="Filippi S."/>
            <person name="Caputo M."/>
            <person name="Cipak L."/>
            <person name="Gregan J."/>
            <person name="Ammerer G."/>
            <person name="Frontini M."/>
            <person name="Willems D."/>
            <person name="Prantera G."/>
            <person name="Balajee A.S."/>
            <person name="Proietti-De-Santis L."/>
        </authorList>
    </citation>
    <scope>INTERACTION WITH ERCC6</scope>
</reference>
<reference key="51">
    <citation type="journal article" date="2017" name="Nat. Struct. Mol. Biol.">
        <title>Site-specific mapping of the human SUMO proteome reveals co-modification with phosphorylation.</title>
        <authorList>
            <person name="Hendriks I.A."/>
            <person name="Lyon D."/>
            <person name="Young C."/>
            <person name="Jensen L.J."/>
            <person name="Vertegaal A.C."/>
            <person name="Nielsen M.L."/>
        </authorList>
    </citation>
    <scope>SUMOYLATION [LARGE SCALE ANALYSIS] AT LYS-4 AND LYS-160</scope>
    <scope>IDENTIFICATION BY MASS SPECTROMETRY [LARGE SCALE ANALYSIS]</scope>
</reference>
<reference key="52">
    <citation type="journal article" date="2017" name="Nucleic Acids Res.">
        <title>CHD3 and CHD4 form distinct NuRD complexes with different yet overlapping functionality.</title>
        <authorList>
            <person name="Hoffmeister H."/>
            <person name="Fuchs A."/>
            <person name="Erdel F."/>
            <person name="Pinz S."/>
            <person name="Groebner-Ferreira R."/>
            <person name="Bruckmann A."/>
            <person name="Deutzmann R."/>
            <person name="Schwartz U."/>
            <person name="Maldonado R."/>
            <person name="Huber C."/>
            <person name="Dendorfer A.S."/>
            <person name="Rippe K."/>
            <person name="Laengst G."/>
        </authorList>
    </citation>
    <scope>FUNCTION</scope>
    <scope>IDENTIFICATION IN THE NURD COMPLEX</scope>
    <scope>IDENTIFICATION BY MASS SPECTROMETRY</scope>
    <scope>SUBCELLULAR LOCATION</scope>
</reference>
<reference key="53">
    <citation type="journal article" date="2018" name="Nat. Commun.">
        <title>Armadillo repeat containing 12 promotes neuroblastoma progression through interaction with retinoblastoma binding protein 4.</title>
        <authorList>
            <person name="Li D."/>
            <person name="Song H."/>
            <person name="Mei H."/>
            <person name="Fang E."/>
            <person name="Wang X."/>
            <person name="Yang F."/>
            <person name="Li H."/>
            <person name="Chen Y."/>
            <person name="Huang K."/>
            <person name="Zheng L."/>
            <person name="Tong Q."/>
        </authorList>
    </citation>
    <scope>INTERACTION WITH ARMC12</scope>
    <scope>MUTAGENESIS OF VAL-35</scope>
    <scope>SUBCELLULAR LOCATION</scope>
    <scope>TISSUE SPECIFICITY</scope>
</reference>
<reference key="54">
    <citation type="journal article" date="2021" name="FEBS J.">
        <title>Cross-linking mass spectrometry reveals the structural topology of peripheral NuRD subunits relative to the core complex.</title>
        <authorList>
            <person name="Spruijt C.G."/>
            <person name="Graewe C."/>
            <person name="Kleinendorst S.C."/>
            <person name="Baltissen M.P.A."/>
            <person name="Vermeulen M."/>
        </authorList>
    </citation>
    <scope>IDENTIFICATION IN THE NURD COMPLEX</scope>
    <scope>IDENTIFICATION BY MASS SPECTROMETRY</scope>
    <scope>SUBCELLULAR LOCATION</scope>
</reference>
<reference evidence="45 46 47" key="55">
    <citation type="journal article" date="2014" name="J. Biol. Chem.">
        <title>Insight into the architecture of the NuRD complex: structure of the RbAp48-MTA1 subcomplex.</title>
        <authorList>
            <person name="Alqarni S.S."/>
            <person name="Murthy A."/>
            <person name="Zhang W."/>
            <person name="Przewloka M.R."/>
            <person name="Silva A.P."/>
            <person name="Watson A.A."/>
            <person name="Lejon S."/>
            <person name="Pei X.Y."/>
            <person name="Smits A.H."/>
            <person name="Kloet S.L."/>
            <person name="Wang H."/>
            <person name="Shepherd N.E."/>
            <person name="Stokes P.H."/>
            <person name="Blobel G.A."/>
            <person name="Vermeulen M."/>
            <person name="Glover D.M."/>
            <person name="Mackay J.P."/>
            <person name="Laue E.D."/>
        </authorList>
    </citation>
    <scope>X-RAY CRYSTALLOGRAPHY (2.15 ANGSTROMS) IN COMPLEX WITH MTA1</scope>
    <scope>INTERACTION WITH MTA1 AND HISTONE H4</scope>
</reference>
<reference evidence="50" key="56">
    <citation type="journal article" date="2018" name="Biochem. J.">
        <title>Structural and functional characterization of the RBBP4-ZNF827 interaction and its role in NuRD recruitment to telomeres.</title>
        <authorList>
            <person name="Yang S.F."/>
            <person name="Sun A.A."/>
            <person name="Shi Y."/>
            <person name="Li F."/>
            <person name="Pickett H.A."/>
        </authorList>
    </citation>
    <scope>X-RAY CRYSTALLOGRAPHY (1.90 ANGSTROMS) OF 6-410 IN COMPLEX WITH ZNF827</scope>
    <scope>SUBCELLULAR LOCATION</scope>
    <scope>MUTAGENESIS OF PRO-43; SER-73; 126-GLU--ASN-128; GLU-126; ASN-128; GLU-179; TYR-181; GLU-231; ASN-277 AND GLU-395</scope>
</reference>
<reference evidence="48 49" key="57">
    <citation type="journal article" date="2018" name="Mol. Cell">
        <title>Unique Structural Platforms of Suz12 Dictate Distinct Classes of PRC2 for Chromatin Binding.</title>
        <authorList>
            <person name="Chen S."/>
            <person name="Jiao L."/>
            <person name="Shubbar M."/>
            <person name="Yang X."/>
            <person name="Liu X."/>
        </authorList>
    </citation>
    <scope>X-RAY CRYSTALLOGRAPHY (2.90 ANGSTROMS) IN COMPLEX WITH SUZ12; AEBP2 AND JARID2</scope>
    <scope>FUNCTION</scope>
    <scope>IDENTIFICATION IN THE PRC2 COMPLEX</scope>
    <scope>SUBCELLULAR LOCATION</scope>
</reference>
<reference evidence="51" key="58">
    <citation type="journal article" date="2020" name="Mol. Cell">
        <title>A Dimeric Structural Scaffold for PRC2-PCL Targeting to CpG Island Chromatin.</title>
        <authorList>
            <person name="Chen S."/>
            <person name="Jiao L."/>
            <person name="Liu X."/>
            <person name="Yang X."/>
            <person name="Liu X."/>
        </authorList>
    </citation>
    <scope>X-RAY CRYSTALLOGRAPHY (2.89 ANGSTROMS) IN COMPLEX WITH SUZ12; PHF19 AND JARID2</scope>
    <scope>FUNCTION</scope>
    <scope>IDENTIFICATION IN THE PRC2 COMPLEX</scope>
</reference>
<reference evidence="52" key="59">
    <citation type="journal article" date="2024" name="Nucleic Acids Res.">
        <title>ZNF512B binds RBBP4 via a variant NuRD interaction motif and aggregates chromatin in a NuRD complex-independent manner.</title>
        <authorList>
            <person name="Wunderlich T.M."/>
            <person name="Deshpande C."/>
            <person name="Paasche L.W."/>
            <person name="Friedrich T."/>
            <person name="Diegmueller F."/>
            <person name="Haddad E."/>
            <person name="Kreienbaum C."/>
            <person name="Naseer H."/>
            <person name="Stebel S.E."/>
            <person name="Daus N."/>
            <person name="Leers J."/>
            <person name="Lan J."/>
            <person name="Trinh V.T."/>
            <person name="Vazquez O."/>
            <person name="Butter F."/>
            <person name="Bartkuhn M."/>
            <person name="Mackay J.P."/>
            <person name="Hake S.B."/>
        </authorList>
    </citation>
    <scope>X-RAY CRYSTALLOGRAPHY (2.20 ANGSTROMS) IN COMPLEX WITH ZNF512B</scope>
    <scope>FUNCTION</scope>
    <scope>SUBUNIT</scope>
    <scope>SUBCELLULAR LOCATION</scope>
    <scope>WD REPEATS</scope>
</reference>
<keyword id="KW-0002">3D-structure</keyword>
<keyword id="KW-0007">Acetylation</keyword>
<keyword id="KW-0025">Alternative splicing</keyword>
<keyword id="KW-0131">Cell cycle</keyword>
<keyword id="KW-0143">Chaperone</keyword>
<keyword id="KW-0156">Chromatin regulator</keyword>
<keyword id="KW-0158">Chromosome</keyword>
<keyword id="KW-0903">Direct protein sequencing</keyword>
<keyword id="KW-0227">DNA damage</keyword>
<keyword id="KW-0234">DNA repair</keyword>
<keyword id="KW-0235">DNA replication</keyword>
<keyword id="KW-1017">Isopeptide bond</keyword>
<keyword id="KW-0539">Nucleus</keyword>
<keyword id="KW-0597">Phosphoprotein</keyword>
<keyword id="KW-1267">Proteomics identification</keyword>
<keyword id="KW-1185">Reference proteome</keyword>
<keyword id="KW-0677">Repeat</keyword>
<keyword id="KW-0678">Repressor</keyword>
<keyword id="KW-0779">Telomere</keyword>
<keyword id="KW-0804">Transcription</keyword>
<keyword id="KW-0805">Transcription regulation</keyword>
<keyword id="KW-0832">Ubl conjugation</keyword>
<keyword id="KW-0853">WD repeat</keyword>
<proteinExistence type="evidence at protein level"/>
<gene>
    <name type="primary">RBBP4</name>
    <name type="synonym">RBAP48</name>
</gene>
<feature type="initiator methionine" description="Removed" evidence="38 53 56 57">
    <location>
        <position position="1"/>
    </location>
</feature>
<feature type="chain" id="PRO_0000051186" description="Histone-binding protein RBBP4">
    <location>
        <begin position="2"/>
        <end position="425"/>
    </location>
</feature>
<feature type="repeat" description="WD 1" evidence="31 52">
    <location>
        <begin position="32"/>
        <end position="125"/>
    </location>
</feature>
<feature type="repeat" description="WD 2" evidence="31 52">
    <location>
        <begin position="126"/>
        <end position="175"/>
    </location>
</feature>
<feature type="repeat" description="WD 3" evidence="31 52">
    <location>
        <begin position="176"/>
        <end position="223"/>
    </location>
</feature>
<feature type="repeat" description="WD 4" evidence="31 52">
    <location>
        <begin position="225"/>
        <end position="270"/>
    </location>
</feature>
<feature type="repeat" description="WD 5" evidence="31 52">
    <location>
        <begin position="271"/>
        <end position="314"/>
    </location>
</feature>
<feature type="repeat" description="WD 6" evidence="31 52">
    <location>
        <begin position="315"/>
        <end position="371"/>
    </location>
</feature>
<feature type="repeat" description="WD 7" evidence="31 52">
    <location>
        <begin position="372"/>
        <end position="404"/>
    </location>
</feature>
<feature type="region of interest" description="Interaction with ARMC12" evidence="27">
    <location>
        <begin position="2"/>
        <end position="132"/>
    </location>
</feature>
<feature type="modified residue" description="N-acetylalanine" evidence="38 53 56 57">
    <location>
        <position position="2"/>
    </location>
</feature>
<feature type="modified residue" description="N6-acetyllysine; alternate" evidence="54">
    <location>
        <position position="4"/>
    </location>
</feature>
<feature type="modified residue" description="Phosphoserine" evidence="55 58">
    <location>
        <position position="110"/>
    </location>
</feature>
<feature type="modified residue" description="N6-acetyllysine; alternate" evidence="1">
    <location>
        <position position="160"/>
    </location>
</feature>
<feature type="modified residue" description="Phosphoserine" evidence="58">
    <location>
        <position position="355"/>
    </location>
</feature>
<feature type="cross-link" description="Glycyl lysine isopeptide (Lys-Gly) (interchain with G-Cter in SUMO2); alternate" evidence="60">
    <location>
        <position position="4"/>
    </location>
</feature>
<feature type="cross-link" description="Glycyl lysine isopeptide (Lys-Gly) (interchain with G-Cter in ubiquitin); alternate">
    <location>
        <position position="4"/>
    </location>
</feature>
<feature type="cross-link" description="Glycyl lysine isopeptide (Lys-Gly) (interchain with G-Cter in SUMO2); alternate" evidence="59 60">
    <location>
        <position position="160"/>
    </location>
</feature>
<feature type="splice variant" id="VSP_040087" description="In isoform 4." evidence="39">
    <location>
        <begin position="1"/>
        <end position="35"/>
    </location>
</feature>
<feature type="splice variant" id="VSP_040088" description="In isoform 2." evidence="42">
    <location>
        <position position="7"/>
    </location>
</feature>
<feature type="splice variant" id="VSP_040089" description="In isoform 3." evidence="41">
    <original>AENIYNDEDPEGSVDPEGQGS</original>
    <variation>ELVLDH</variation>
    <location>
        <begin position="405"/>
        <end position="425"/>
    </location>
</feature>
<feature type="mutagenesis site" description="Loss of interaction with ARMC12." evidence="27">
    <original>V</original>
    <variation>A</variation>
    <location>
        <position position="35"/>
    </location>
</feature>
<feature type="mutagenesis site" description="Loss of interaction with ZNF827 and loss of localization to telomeres; when associated with A-73." evidence="28">
    <original>P</original>
    <variation>A</variation>
    <location>
        <position position="43"/>
    </location>
</feature>
<feature type="mutagenesis site" description="Loss of interaction with ZNF827 and loss of localization to telomeres; when associated with A-43." evidence="28">
    <original>S</original>
    <variation>A</variation>
    <location>
        <position position="73"/>
    </location>
</feature>
<feature type="mutagenesis site" description="Loss of interaction with ZNF827." evidence="44">
    <original>EVN</original>
    <variation>AVA</variation>
    <location>
        <begin position="126"/>
        <end position="128"/>
    </location>
</feature>
<feature type="mutagenesis site" description="Loss of interaction with ZNF827 and loss of localization to telomeres; when associated with A-128 and A-179." evidence="28">
    <original>E</original>
    <variation>A</variation>
    <location>
        <position position="126"/>
    </location>
</feature>
<feature type="mutagenesis site" description="Loss of interaction with ZNF827 and loss of localization to telomeres; when associated with A-126 and A-179." evidence="28">
    <original>N</original>
    <variation>A</variation>
    <location>
        <position position="128"/>
    </location>
</feature>
<feature type="mutagenesis site" description="Loss of interaction with ZNF827 and loss of localization to telomeres; when associated with A-126 and A-128." evidence="28">
    <original>E</original>
    <variation>A</variation>
    <location>
        <position position="179"/>
    </location>
</feature>
<feature type="mutagenesis site" description="Loss of interaction with ZNF827 and loss of localization to telomeres." evidence="28">
    <original>Y</original>
    <variation>A</variation>
    <location>
        <position position="181"/>
    </location>
</feature>
<feature type="mutagenesis site" description="Decreased interaction with ZNF827; when associated with A-277." evidence="44">
    <original>E</original>
    <variation>A</variation>
    <location>
        <position position="231"/>
    </location>
</feature>
<feature type="mutagenesis site" description="Decreased interaction with ZNF827; when associated with A-231." evidence="44">
    <original>N</original>
    <variation>A</variation>
    <location>
        <position position="277"/>
    </location>
</feature>
<feature type="mutagenesis site" description="Decreased interaction with ZNF827." evidence="44">
    <original>E</original>
    <variation>A</variation>
    <location>
        <position position="395"/>
    </location>
</feature>
<feature type="sequence conflict" description="In Ref. 8; AAH15123." evidence="43" ref="8">
    <original>F</original>
    <variation>G</variation>
    <location>
        <position position="61"/>
    </location>
</feature>
<feature type="helix" evidence="66">
    <location>
        <begin position="8"/>
        <end position="11"/>
    </location>
</feature>
<feature type="turn" evidence="61">
    <location>
        <begin position="12"/>
        <end position="14"/>
    </location>
</feature>
<feature type="helix" evidence="63">
    <location>
        <begin position="16"/>
        <end position="31"/>
    </location>
</feature>
<feature type="strand" evidence="63">
    <location>
        <begin position="32"/>
        <end position="39"/>
    </location>
</feature>
<feature type="strand" evidence="63">
    <location>
        <begin position="47"/>
        <end position="54"/>
    </location>
</feature>
<feature type="strand" evidence="63">
    <location>
        <begin position="60"/>
        <end position="69"/>
    </location>
</feature>
<feature type="strand" evidence="63">
    <location>
        <begin position="73"/>
        <end position="75"/>
    </location>
</feature>
<feature type="strand" evidence="63">
    <location>
        <begin position="77"/>
        <end position="87"/>
    </location>
</feature>
<feature type="strand" evidence="70">
    <location>
        <begin position="89"/>
        <end position="91"/>
    </location>
</feature>
<feature type="helix" evidence="70">
    <location>
        <begin position="95"/>
        <end position="98"/>
    </location>
</feature>
<feature type="turn" evidence="62">
    <location>
        <begin position="100"/>
        <end position="103"/>
    </location>
</feature>
<feature type="strand" evidence="70">
    <location>
        <begin position="106"/>
        <end position="108"/>
    </location>
</feature>
<feature type="turn" evidence="67">
    <location>
        <begin position="112"/>
        <end position="114"/>
    </location>
</feature>
<feature type="strand" evidence="63">
    <location>
        <begin position="115"/>
        <end position="125"/>
    </location>
</feature>
<feature type="strand" evidence="63">
    <location>
        <begin position="128"/>
        <end position="133"/>
    </location>
</feature>
<feature type="strand" evidence="63">
    <location>
        <begin position="136"/>
        <end position="143"/>
    </location>
</feature>
<feature type="strand" evidence="63">
    <location>
        <begin position="145"/>
        <end position="147"/>
    </location>
</feature>
<feature type="strand" evidence="63">
    <location>
        <begin position="149"/>
        <end position="153"/>
    </location>
</feature>
<feature type="helix" evidence="63">
    <location>
        <begin position="154"/>
        <end position="156"/>
    </location>
</feature>
<feature type="strand" evidence="73">
    <location>
        <begin position="163"/>
        <end position="165"/>
    </location>
</feature>
<feature type="strand" evidence="63">
    <location>
        <begin position="170"/>
        <end position="174"/>
    </location>
</feature>
<feature type="strand" evidence="63">
    <location>
        <begin position="183"/>
        <end position="185"/>
    </location>
</feature>
<feature type="strand" evidence="63">
    <location>
        <begin position="187"/>
        <end position="189"/>
    </location>
</feature>
<feature type="strand" evidence="63">
    <location>
        <begin position="192"/>
        <end position="196"/>
    </location>
</feature>
<feature type="strand" evidence="69">
    <location>
        <begin position="198"/>
        <end position="200"/>
    </location>
</feature>
<feature type="strand" evidence="63">
    <location>
        <begin position="202"/>
        <end position="206"/>
    </location>
</feature>
<feature type="strand" evidence="70">
    <location>
        <begin position="208"/>
        <end position="210"/>
    </location>
</feature>
<feature type="turn" evidence="65">
    <location>
        <begin position="212"/>
        <end position="214"/>
    </location>
</feature>
<feature type="strand" evidence="63">
    <location>
        <begin position="216"/>
        <end position="218"/>
    </location>
</feature>
<feature type="strand" evidence="63">
    <location>
        <begin position="220"/>
        <end position="223"/>
    </location>
</feature>
<feature type="strand" evidence="63">
    <location>
        <begin position="230"/>
        <end position="235"/>
    </location>
</feature>
<feature type="strand" evidence="63">
    <location>
        <begin position="242"/>
        <end position="247"/>
    </location>
</feature>
<feature type="strand" evidence="63">
    <location>
        <begin position="250"/>
        <end position="256"/>
    </location>
</feature>
<feature type="strand" evidence="63">
    <location>
        <begin position="262"/>
        <end position="264"/>
    </location>
</feature>
<feature type="strand" evidence="63">
    <location>
        <begin position="266"/>
        <end position="270"/>
    </location>
</feature>
<feature type="strand" evidence="63">
    <location>
        <begin position="276"/>
        <end position="281"/>
    </location>
</feature>
<feature type="strand" evidence="68">
    <location>
        <begin position="283"/>
        <end position="287"/>
    </location>
</feature>
<feature type="strand" evidence="63">
    <location>
        <begin position="288"/>
        <end position="293"/>
    </location>
</feature>
<feature type="strand" evidence="63">
    <location>
        <begin position="296"/>
        <end position="302"/>
    </location>
</feature>
<feature type="helix" evidence="66">
    <location>
        <begin position="303"/>
        <end position="305"/>
    </location>
</feature>
<feature type="strand" evidence="64">
    <location>
        <begin position="306"/>
        <end position="308"/>
    </location>
</feature>
<feature type="strand" evidence="63">
    <location>
        <begin position="310"/>
        <end position="314"/>
    </location>
</feature>
<feature type="strand" evidence="63">
    <location>
        <begin position="320"/>
        <end position="325"/>
    </location>
</feature>
<feature type="strand" evidence="72">
    <location>
        <begin position="327"/>
        <end position="329"/>
    </location>
</feature>
<feature type="strand" evidence="63">
    <location>
        <begin position="332"/>
        <end position="337"/>
    </location>
</feature>
<feature type="strand" evidence="71">
    <location>
        <begin position="338"/>
        <end position="340"/>
    </location>
</feature>
<feature type="strand" evidence="63">
    <location>
        <begin position="342"/>
        <end position="346"/>
    </location>
</feature>
<feature type="helix" evidence="63">
    <location>
        <begin position="347"/>
        <end position="349"/>
    </location>
</feature>
<feature type="helix" evidence="65">
    <location>
        <begin position="356"/>
        <end position="360"/>
    </location>
</feature>
<feature type="strand" evidence="63">
    <location>
        <begin position="366"/>
        <end position="370"/>
    </location>
</feature>
<feature type="strand" evidence="63">
    <location>
        <begin position="377"/>
        <end position="382"/>
    </location>
</feature>
<feature type="strand" evidence="63">
    <location>
        <begin position="384"/>
        <end position="386"/>
    </location>
</feature>
<feature type="strand" evidence="63">
    <location>
        <begin position="389"/>
        <end position="394"/>
    </location>
</feature>
<feature type="strand" evidence="63">
    <location>
        <begin position="397"/>
        <end position="404"/>
    </location>
</feature>
<feature type="helix" evidence="63">
    <location>
        <begin position="406"/>
        <end position="409"/>
    </location>
</feature>
<accession>Q09028</accession>
<accession>B2R6G9</accession>
<accession>B4DRH0</accession>
<accession>D3DPQ3</accession>
<accession>P31149</accession>
<accession>Q53H02</accession>
<accession>Q96BV9</accession>
<protein>
    <recommendedName>
        <fullName>Histone-binding protein RBBP4</fullName>
    </recommendedName>
    <alternativeName>
        <fullName>Chromatin assembly factor 1 subunit C</fullName>
        <shortName>CAF-1 subunit C</shortName>
    </alternativeName>
    <alternativeName>
        <fullName>Chromatin assembly factor I p48 subunit</fullName>
        <shortName>CAF-I 48 kDa subunit</shortName>
        <shortName>CAF-I p48</shortName>
    </alternativeName>
    <alternativeName>
        <fullName>Nucleosome-remodeling factor subunit RBAP48</fullName>
    </alternativeName>
    <alternativeName>
        <fullName evidence="40">Retinoblastoma-binding protein 4</fullName>
        <shortName>RBBP-4</shortName>
    </alternativeName>
    <alternativeName>
        <fullName>Retinoblastoma-binding protein p48</fullName>
    </alternativeName>
</protein>
<organism>
    <name type="scientific">Homo sapiens</name>
    <name type="common">Human</name>
    <dbReference type="NCBI Taxonomy" id="9606"/>
    <lineage>
        <taxon>Eukaryota</taxon>
        <taxon>Metazoa</taxon>
        <taxon>Chordata</taxon>
        <taxon>Craniata</taxon>
        <taxon>Vertebrata</taxon>
        <taxon>Euteleostomi</taxon>
        <taxon>Mammalia</taxon>
        <taxon>Eutheria</taxon>
        <taxon>Euarchontoglires</taxon>
        <taxon>Primates</taxon>
        <taxon>Haplorrhini</taxon>
        <taxon>Catarrhini</taxon>
        <taxon>Hominidae</taxon>
        <taxon>Homo</taxon>
    </lineage>
</organism>
<dbReference type="EMBL" id="X74262">
    <property type="protein sequence ID" value="CAA52321.1"/>
    <property type="molecule type" value="mRNA"/>
</dbReference>
<dbReference type="EMBL" id="X71810">
    <property type="protein sequence ID" value="CAA50685.1"/>
    <property type="molecule type" value="mRNA"/>
</dbReference>
<dbReference type="EMBL" id="BT007309">
    <property type="protein sequence ID" value="AAP35973.1"/>
    <property type="molecule type" value="mRNA"/>
</dbReference>
<dbReference type="EMBL" id="AK299251">
    <property type="protein sequence ID" value="BAG61282.1"/>
    <property type="molecule type" value="mRNA"/>
</dbReference>
<dbReference type="EMBL" id="AK312571">
    <property type="protein sequence ID" value="BAG35466.1"/>
    <property type="molecule type" value="mRNA"/>
</dbReference>
<dbReference type="EMBL" id="AK222779">
    <property type="protein sequence ID" value="BAD96499.1"/>
    <property type="molecule type" value="mRNA"/>
</dbReference>
<dbReference type="EMBL" id="AC114489">
    <property type="status" value="NOT_ANNOTATED_CDS"/>
    <property type="molecule type" value="Genomic_DNA"/>
</dbReference>
<dbReference type="EMBL" id="CH471059">
    <property type="protein sequence ID" value="EAX07513.1"/>
    <property type="molecule type" value="Genomic_DNA"/>
</dbReference>
<dbReference type="EMBL" id="CH471059">
    <property type="protein sequence ID" value="EAX07514.1"/>
    <property type="molecule type" value="Genomic_DNA"/>
</dbReference>
<dbReference type="EMBL" id="BC003092">
    <property type="protein sequence ID" value="AAH03092.1"/>
    <property type="molecule type" value="mRNA"/>
</dbReference>
<dbReference type="EMBL" id="BC015123">
    <property type="protein sequence ID" value="AAH15123.1"/>
    <property type="molecule type" value="mRNA"/>
</dbReference>
<dbReference type="EMBL" id="BC053904">
    <property type="protein sequence ID" value="AAH53904.1"/>
    <property type="molecule type" value="mRNA"/>
</dbReference>
<dbReference type="EMBL" id="BC075836">
    <property type="protein sequence ID" value="AAH75836.1"/>
    <property type="molecule type" value="mRNA"/>
</dbReference>
<dbReference type="CCDS" id="CCDS366.1">
    <molecule id="Q09028-1"/>
</dbReference>
<dbReference type="CCDS" id="CCDS44105.1">
    <molecule id="Q09028-2"/>
</dbReference>
<dbReference type="CCDS" id="CCDS44106.1">
    <molecule id="Q09028-4"/>
</dbReference>
<dbReference type="PIR" id="S36112">
    <property type="entry name" value="S36112"/>
</dbReference>
<dbReference type="RefSeq" id="NP_001128727.1">
    <molecule id="Q09028-2"/>
    <property type="nucleotide sequence ID" value="NM_001135255.2"/>
</dbReference>
<dbReference type="RefSeq" id="NP_001128728.1">
    <molecule id="Q09028-4"/>
    <property type="nucleotide sequence ID" value="NM_001135256.2"/>
</dbReference>
<dbReference type="RefSeq" id="NP_005601.1">
    <molecule id="Q09028-1"/>
    <property type="nucleotide sequence ID" value="NM_005610.3"/>
</dbReference>
<dbReference type="PDB" id="2XU7">
    <property type="method" value="X-ray"/>
    <property type="resolution" value="1.90 A"/>
    <property type="chains" value="A/B=1-425"/>
</dbReference>
<dbReference type="PDB" id="3GFC">
    <property type="method" value="X-ray"/>
    <property type="resolution" value="2.30 A"/>
    <property type="chains" value="A=1-425"/>
</dbReference>
<dbReference type="PDB" id="4PBY">
    <property type="method" value="X-ray"/>
    <property type="resolution" value="2.50 A"/>
    <property type="chains" value="A/B=1-425"/>
</dbReference>
<dbReference type="PDB" id="4PBZ">
    <property type="method" value="X-ray"/>
    <property type="resolution" value="2.15 A"/>
    <property type="chains" value="A=1-425"/>
</dbReference>
<dbReference type="PDB" id="4PC0">
    <property type="method" value="X-ray"/>
    <property type="resolution" value="2.50 A"/>
    <property type="chains" value="A/B=1-425"/>
</dbReference>
<dbReference type="PDB" id="4R7A">
    <property type="method" value="X-ray"/>
    <property type="resolution" value="1.85 A"/>
    <property type="chains" value="B=1-425"/>
</dbReference>
<dbReference type="PDB" id="5FXY">
    <property type="method" value="X-ray"/>
    <property type="resolution" value="3.20 A"/>
    <property type="chains" value="A/C/E/G=1-425"/>
</dbReference>
<dbReference type="PDB" id="5VTB">
    <property type="method" value="X-ray"/>
    <property type="resolution" value="2.40 A"/>
    <property type="chains" value="A=1-425"/>
</dbReference>
<dbReference type="PDB" id="5WAI">
    <property type="method" value="X-ray"/>
    <property type="resolution" value="2.90 A"/>
    <property type="chains" value="A/E=1-425"/>
</dbReference>
<dbReference type="PDB" id="5WAK">
    <property type="method" value="X-ray"/>
    <property type="resolution" value="3.20 A"/>
    <property type="chains" value="A=1-425"/>
</dbReference>
<dbReference type="PDB" id="5XWR">
    <property type="method" value="X-ray"/>
    <property type="resolution" value="2.69 A"/>
    <property type="chains" value="A/B=1-425"/>
</dbReference>
<dbReference type="PDB" id="5XXQ">
    <property type="method" value="X-ray"/>
    <property type="resolution" value="1.90 A"/>
    <property type="chains" value="A/B=1-425"/>
</dbReference>
<dbReference type="PDB" id="5Y1U">
    <property type="method" value="X-ray"/>
    <property type="resolution" value="2.14 A"/>
    <property type="chains" value="A/B=1-425"/>
</dbReference>
<dbReference type="PDB" id="6BW3">
    <property type="method" value="X-ray"/>
    <property type="resolution" value="2.20 A"/>
    <property type="chains" value="A/C=1-425"/>
</dbReference>
<dbReference type="PDB" id="6BW4">
    <property type="method" value="X-ray"/>
    <property type="resolution" value="2.00 A"/>
    <property type="chains" value="A/C=1-425"/>
</dbReference>
<dbReference type="PDB" id="6C23">
    <property type="method" value="EM"/>
    <property type="resolution" value="3.90 A"/>
    <property type="chains" value="N=1-425"/>
</dbReference>
<dbReference type="PDB" id="6C24">
    <property type="method" value="EM"/>
    <property type="resolution" value="3.50 A"/>
    <property type="chains" value="N=1-425"/>
</dbReference>
<dbReference type="PDB" id="6G16">
    <property type="method" value="X-ray"/>
    <property type="resolution" value="2.80 A"/>
    <property type="chains" value="A/C/E/G=1-425"/>
</dbReference>
<dbReference type="PDB" id="6NQ3">
    <property type="method" value="X-ray"/>
    <property type="resolution" value="2.89 A"/>
    <property type="chains" value="A/E=1-425"/>
</dbReference>
<dbReference type="PDB" id="6WKR">
    <property type="method" value="EM"/>
    <property type="resolution" value="3.50 A"/>
    <property type="chains" value="N=1-425"/>
</dbReference>
<dbReference type="PDB" id="6ZRC">
    <property type="method" value="X-ray"/>
    <property type="resolution" value="2.60 A"/>
    <property type="chains" value="A/B=1-425"/>
</dbReference>
<dbReference type="PDB" id="6ZRD">
    <property type="method" value="X-ray"/>
    <property type="resolution" value="2.50 A"/>
    <property type="chains" value="A/B=1-425"/>
</dbReference>
<dbReference type="PDB" id="7AOA">
    <property type="method" value="EM"/>
    <property type="resolution" value="19.40 A"/>
    <property type="chains" value="F/G=1-425"/>
</dbReference>
<dbReference type="PDB" id="7KSO">
    <property type="method" value="EM"/>
    <property type="resolution" value="3.90 A"/>
    <property type="chains" value="D=1-425"/>
</dbReference>
<dbReference type="PDB" id="7KSR">
    <property type="method" value="EM"/>
    <property type="resolution" value="4.10 A"/>
    <property type="chains" value="D=1-425"/>
</dbReference>
<dbReference type="PDB" id="7KTP">
    <property type="method" value="EM"/>
    <property type="resolution" value="4.80 A"/>
    <property type="chains" value="D=1-425"/>
</dbReference>
<dbReference type="PDB" id="7M40">
    <property type="method" value="X-ray"/>
    <property type="resolution" value="1.88 A"/>
    <property type="chains" value="A/B=1-425"/>
</dbReference>
<dbReference type="PDB" id="7N40">
    <property type="method" value="X-ray"/>
    <property type="resolution" value="2.55 A"/>
    <property type="chains" value="A=1-425"/>
</dbReference>
<dbReference type="PDB" id="7R1D">
    <property type="method" value="EM"/>
    <property type="resolution" value="3.50 A"/>
    <property type="chains" value="A=1-425"/>
</dbReference>
<dbReference type="PDB" id="7Y5K">
    <property type="method" value="X-ray"/>
    <property type="resolution" value="3.48 A"/>
    <property type="chains" value="C=1-425"/>
</dbReference>
<dbReference type="PDB" id="7Y5L">
    <property type="method" value="X-ray"/>
    <property type="resolution" value="3.42 A"/>
    <property type="chains" value="C/F=1-425"/>
</dbReference>
<dbReference type="PDB" id="7Y5O">
    <property type="method" value="X-ray"/>
    <property type="resolution" value="3.57 A"/>
    <property type="chains" value="C/F=1-425"/>
</dbReference>
<dbReference type="PDB" id="7Y5U">
    <property type="method" value="EM"/>
    <property type="resolution" value="3.80 A"/>
    <property type="chains" value="C=1-425"/>
</dbReference>
<dbReference type="PDB" id="7Y5V">
    <property type="method" value="EM"/>
    <property type="resolution" value="6.10 A"/>
    <property type="chains" value="C/H=1-425"/>
</dbReference>
<dbReference type="PDB" id="8EQV">
    <property type="method" value="EM"/>
    <property type="resolution" value="3.64 A"/>
    <property type="chains" value="A=1-425"/>
</dbReference>
<dbReference type="PDB" id="8FYH">
    <property type="method" value="EM"/>
    <property type="resolution" value="3.40 A"/>
    <property type="chains" value="D/J=1-425"/>
</dbReference>
<dbReference type="PDB" id="8IQF">
    <property type="method" value="EM"/>
    <property type="resolution" value="4.60 A"/>
    <property type="chains" value="C/H=1-425"/>
</dbReference>
<dbReference type="PDB" id="8IQG">
    <property type="method" value="EM"/>
    <property type="resolution" value="3.50 A"/>
    <property type="chains" value="C=1-425"/>
</dbReference>
<dbReference type="PDB" id="8T9G">
    <property type="method" value="EM"/>
    <property type="resolution" value="6.20 A"/>
    <property type="chains" value="L/O=1-425"/>
</dbReference>
<dbReference type="PDB" id="8TAS">
    <property type="method" value="EM"/>
    <property type="resolution" value="4.10 A"/>
    <property type="chains" value="O=1-425"/>
</dbReference>
<dbReference type="PDB" id="8TB9">
    <property type="method" value="EM"/>
    <property type="resolution" value="4.00 A"/>
    <property type="chains" value="O=1-425"/>
</dbReference>
<dbReference type="PDB" id="8TX8">
    <property type="method" value="X-ray"/>
    <property type="resolution" value="2.20 A"/>
    <property type="chains" value="A/B=1-425"/>
</dbReference>
<dbReference type="PDB" id="8VMI">
    <property type="method" value="EM"/>
    <property type="resolution" value="3.10 A"/>
    <property type="chains" value="N=1-425"/>
</dbReference>
<dbReference type="PDB" id="8VML">
    <property type="method" value="EM"/>
    <property type="resolution" value="3.50 A"/>
    <property type="chains" value="N=1-425"/>
</dbReference>
<dbReference type="PDB" id="8VNV">
    <property type="method" value="EM"/>
    <property type="resolution" value="3.10 A"/>
    <property type="chains" value="N=1-425"/>
</dbReference>
<dbReference type="PDB" id="8VNZ">
    <property type="method" value="EM"/>
    <property type="resolution" value="3.50 A"/>
    <property type="chains" value="N=1-425"/>
</dbReference>
<dbReference type="PDB" id="9C8U">
    <property type="method" value="EM"/>
    <property type="resolution" value="3.10 A"/>
    <property type="chains" value="D=1-425"/>
</dbReference>
<dbReference type="PDB" id="9DCH">
    <property type="method" value="EM"/>
    <property type="resolution" value="3.40 A"/>
    <property type="chains" value="D/K=1-425"/>
</dbReference>
<dbReference type="PDBsum" id="2XU7"/>
<dbReference type="PDBsum" id="3GFC"/>
<dbReference type="PDBsum" id="4PBY"/>
<dbReference type="PDBsum" id="4PBZ"/>
<dbReference type="PDBsum" id="4PC0"/>
<dbReference type="PDBsum" id="4R7A"/>
<dbReference type="PDBsum" id="5FXY"/>
<dbReference type="PDBsum" id="5VTB"/>
<dbReference type="PDBsum" id="5WAI"/>
<dbReference type="PDBsum" id="5WAK"/>
<dbReference type="PDBsum" id="5XWR"/>
<dbReference type="PDBsum" id="5XXQ"/>
<dbReference type="PDBsum" id="5Y1U"/>
<dbReference type="PDBsum" id="6BW3"/>
<dbReference type="PDBsum" id="6BW4"/>
<dbReference type="PDBsum" id="6C23"/>
<dbReference type="PDBsum" id="6C24"/>
<dbReference type="PDBsum" id="6G16"/>
<dbReference type="PDBsum" id="6NQ3"/>
<dbReference type="PDBsum" id="6WKR"/>
<dbReference type="PDBsum" id="6ZRC"/>
<dbReference type="PDBsum" id="6ZRD"/>
<dbReference type="PDBsum" id="7AOA"/>
<dbReference type="PDBsum" id="7KSO"/>
<dbReference type="PDBsum" id="7KSR"/>
<dbReference type="PDBsum" id="7KTP"/>
<dbReference type="PDBsum" id="7M40"/>
<dbReference type="PDBsum" id="7N40"/>
<dbReference type="PDBsum" id="7R1D"/>
<dbReference type="PDBsum" id="7Y5K"/>
<dbReference type="PDBsum" id="7Y5L"/>
<dbReference type="PDBsum" id="7Y5O"/>
<dbReference type="PDBsum" id="7Y5U"/>
<dbReference type="PDBsum" id="7Y5V"/>
<dbReference type="PDBsum" id="8EQV"/>
<dbReference type="PDBsum" id="8FYH"/>
<dbReference type="PDBsum" id="8IQF"/>
<dbReference type="PDBsum" id="8IQG"/>
<dbReference type="PDBsum" id="8T9G"/>
<dbReference type="PDBsum" id="8TAS"/>
<dbReference type="PDBsum" id="8TB9"/>
<dbReference type="PDBsum" id="8TX8"/>
<dbReference type="PDBsum" id="8VMI"/>
<dbReference type="PDBsum" id="8VML"/>
<dbReference type="PDBsum" id="8VNV"/>
<dbReference type="PDBsum" id="8VNZ"/>
<dbReference type="PDBsum" id="9C8U"/>
<dbReference type="PDBsum" id="9DCH"/>
<dbReference type="EMDB" id="EMD-11839"/>
<dbReference type="EMDB" id="EMD-14239"/>
<dbReference type="EMDB" id="EMD-21707"/>
<dbReference type="EMDB" id="EMD-23021"/>
<dbReference type="EMDB" id="EMD-23022"/>
<dbReference type="EMDB" id="EMD-23024"/>
<dbReference type="EMDB" id="EMD-23025"/>
<dbReference type="EMDB" id="EMD-23103"/>
<dbReference type="EMDB" id="EMD-28547"/>
<dbReference type="EMDB" id="EMD-29578"/>
<dbReference type="EMDB" id="EMD-29647"/>
<dbReference type="EMDB" id="EMD-29656"/>
<dbReference type="EMDB" id="EMD-33625"/>
<dbReference type="EMDB" id="EMD-33626"/>
<dbReference type="EMDB" id="EMD-3431"/>
<dbReference type="EMDB" id="EMD-35660"/>
<dbReference type="EMDB" id="EMD-35661"/>
<dbReference type="EMDB" id="EMD-41110"/>
<dbReference type="EMDB" id="EMD-41141"/>
<dbReference type="EMDB" id="EMD-41146"/>
<dbReference type="EMDB" id="EMD-43357"/>
<dbReference type="EMDB" id="EMD-43359"/>
<dbReference type="EMDB" id="EMD-43361"/>
<dbReference type="EMDB" id="EMD-43362"/>
<dbReference type="EMDB" id="EMD-46722"/>
<dbReference type="EMDB" id="EMD-46726"/>
<dbReference type="EMDB" id="EMD-46751"/>
<dbReference type="EMDB" id="EMD-7334"/>
<dbReference type="EMDB" id="EMD-7335"/>
<dbReference type="SMR" id="Q09028"/>
<dbReference type="BioGRID" id="111863">
    <property type="interactions" value="583"/>
</dbReference>
<dbReference type="ComplexPortal" id="CPX-2196">
    <property type="entry name" value="Polycomb repressive complex 2.1, EZH1-RBBP4-PCL3-PALI1 variant"/>
</dbReference>
<dbReference type="ComplexPortal" id="CPX-2198">
    <property type="entry name" value="Polycomb repressive complex 2.1,EZH2-RBBP4-PCL3-PALI1 variant"/>
</dbReference>
<dbReference type="ComplexPortal" id="CPX-2204">
    <property type="entry name" value="Polycomb repressive complex 2.1, EZH2-RBBP4-PCL1-PALI1 variant"/>
</dbReference>
<dbReference type="ComplexPortal" id="CPX-2209">
    <property type="entry name" value="Polycomb repressive complex 2.2, EZH2-RBBP4 variant"/>
</dbReference>
<dbReference type="ComplexPortal" id="CPX-2310">
    <property type="entry name" value="Polycomb repressive complex 2.1, EZH1-RBBP4-PCL2-PALI1 variant"/>
</dbReference>
<dbReference type="ComplexPortal" id="CPX-2312">
    <property type="entry name" value="Polycomb repressive complex 2.1, EZH2-RBBP4-PCL2-PALI1 variant"/>
</dbReference>
<dbReference type="ComplexPortal" id="CPX-2317">
    <property type="entry name" value="Polycomb repressive complex 2.1, EZH1-RBBP4-PCL1-EPOP variant"/>
</dbReference>
<dbReference type="ComplexPortal" id="CPX-2318">
    <property type="entry name" value="Polycomb repressive complex 2.1, EZH1-RBBP4-PCL2-EPOP variant"/>
</dbReference>
<dbReference type="ComplexPortal" id="CPX-2322">
    <property type="entry name" value="Polycomb repressive complex 2.1, EZH1-RBBP4-PCL3-EPOP variant"/>
</dbReference>
<dbReference type="ComplexPortal" id="CPX-2324">
    <property type="entry name" value="Polycomb repressive complex 2.1, EZH2-RBBP4-PCL1-EPOP variant"/>
</dbReference>
<dbReference type="ComplexPortal" id="CPX-2326">
    <property type="entry name" value="Polycomb repressive complex 2.1, EZH2-RBBP4-PCL2-EPOP variant"/>
</dbReference>
<dbReference type="ComplexPortal" id="CPX-2328">
    <property type="entry name" value="Polycomb repressive complex 2.1, EZH2-RBBP4-PCL3-EPOP variant"/>
</dbReference>
<dbReference type="ComplexPortal" id="CPX-2330">
    <property type="entry name" value="Polycomb repressive complex 2.2, EZH1-RBBP4 variant"/>
</dbReference>
<dbReference type="ComplexPortal" id="CPX-2366">
    <property type="entry name" value="Myb-MuvB transcriptional activation complex"/>
</dbReference>
<dbReference type="ComplexPortal" id="CPX-2368">
    <property type="entry name" value="DREAM transcriptional repressor complex, RBL1 variant"/>
</dbReference>
<dbReference type="ComplexPortal" id="CPX-2569">
    <property type="entry name" value="Polycomb repressive complex 2.1, EZH1-RBBP4-PCL1-PALI1 variant"/>
</dbReference>
<dbReference type="ComplexPortal" id="CPX-3321">
    <property type="entry name" value="SIN3A histone deacetylase complex"/>
</dbReference>
<dbReference type="ComplexPortal" id="CPX-3322">
    <property type="entry name" value="SIN3B histone deacetylase complex"/>
</dbReference>
<dbReference type="ComplexPortal" id="CPX-3323">
    <property type="entry name" value="SIN3A histone deacetylase complex, ES cell-specific variant"/>
</dbReference>
<dbReference type="ComplexPortal" id="CPX-569">
    <property type="entry name" value="Chromatin assembly factor 1 complex"/>
</dbReference>
<dbReference type="ComplexPortal" id="CPX-688">
    <property type="entry name" value="NuRF chromatin remodeling complex"/>
</dbReference>
<dbReference type="ComplexPortal" id="CPX-7461">
    <property type="entry name" value="DREAM transcriptional repressor complex, RBL2 variant"/>
</dbReference>
<dbReference type="ComplexPortal" id="CPX-7462">
    <property type="entry name" value="Myb-MuvB-FOXM1 transcriptional activation complex"/>
</dbReference>
<dbReference type="ComplexPortal" id="CPX-880">
    <property type="entry name" value="MBD2/NuRD nucleosome remodeling and deacetylase complex"/>
</dbReference>
<dbReference type="ComplexPortal" id="CPX-922">
    <property type="entry name" value="MBD3/NuRD nucleosome remodeling and deacetylase complex"/>
</dbReference>
<dbReference type="CORUM" id="Q09028"/>
<dbReference type="DIP" id="DIP-33495N"/>
<dbReference type="FunCoup" id="Q09028">
    <property type="interactions" value="3860"/>
</dbReference>
<dbReference type="IntAct" id="Q09028">
    <property type="interactions" value="271"/>
</dbReference>
<dbReference type="MINT" id="Q09028"/>
<dbReference type="STRING" id="9606.ENSP00000362592"/>
<dbReference type="BindingDB" id="Q09028"/>
<dbReference type="ChEMBL" id="CHEMBL2189120"/>
<dbReference type="GlyCosmos" id="Q09028">
    <property type="glycosylation" value="1 site, 2 glycans"/>
</dbReference>
<dbReference type="GlyGen" id="Q09028">
    <property type="glycosylation" value="2 sites, 1 N-linked glycan (1 site), 2 O-linked glycans (1 site)"/>
</dbReference>
<dbReference type="iPTMnet" id="Q09028"/>
<dbReference type="PhosphoSitePlus" id="Q09028"/>
<dbReference type="SwissPalm" id="Q09028"/>
<dbReference type="BioMuta" id="RBBP4"/>
<dbReference type="DMDM" id="1172846"/>
<dbReference type="jPOST" id="Q09028"/>
<dbReference type="MassIVE" id="Q09028"/>
<dbReference type="PaxDb" id="9606-ENSP00000362592"/>
<dbReference type="PeptideAtlas" id="Q09028"/>
<dbReference type="ProteomicsDB" id="58712">
    <molecule id="Q09028-1"/>
</dbReference>
<dbReference type="ProteomicsDB" id="58713">
    <molecule id="Q09028-2"/>
</dbReference>
<dbReference type="ProteomicsDB" id="58714">
    <molecule id="Q09028-3"/>
</dbReference>
<dbReference type="ProteomicsDB" id="58715">
    <molecule id="Q09028-4"/>
</dbReference>
<dbReference type="Pumba" id="Q09028"/>
<dbReference type="Antibodypedia" id="3343">
    <property type="antibodies" value="489 antibodies from 38 providers"/>
</dbReference>
<dbReference type="DNASU" id="5928"/>
<dbReference type="Ensembl" id="ENST00000373485.5">
    <molecule id="Q09028-3"/>
    <property type="protein sequence ID" value="ENSP00000362584.1"/>
    <property type="gene ID" value="ENSG00000162521.19"/>
</dbReference>
<dbReference type="Ensembl" id="ENST00000373493.10">
    <molecule id="Q09028-1"/>
    <property type="protein sequence ID" value="ENSP00000362592.4"/>
    <property type="gene ID" value="ENSG00000162521.19"/>
</dbReference>
<dbReference type="Ensembl" id="ENST00000414241.7">
    <molecule id="Q09028-2"/>
    <property type="protein sequence ID" value="ENSP00000398242.3"/>
    <property type="gene ID" value="ENSG00000162521.19"/>
</dbReference>
<dbReference type="Ensembl" id="ENST00000458695.6">
    <molecule id="Q09028-4"/>
    <property type="protein sequence ID" value="ENSP00000396057.2"/>
    <property type="gene ID" value="ENSG00000162521.19"/>
</dbReference>
<dbReference type="GeneID" id="5928"/>
<dbReference type="KEGG" id="hsa:5928"/>
<dbReference type="MANE-Select" id="ENST00000373493.10">
    <property type="protein sequence ID" value="ENSP00000362592.4"/>
    <property type="RefSeq nucleotide sequence ID" value="NM_005610.3"/>
    <property type="RefSeq protein sequence ID" value="NP_005601.1"/>
</dbReference>
<dbReference type="UCSC" id="uc001bvr.3">
    <molecule id="Q09028-1"/>
    <property type="organism name" value="human"/>
</dbReference>
<dbReference type="AGR" id="HGNC:9887"/>
<dbReference type="CTD" id="5928"/>
<dbReference type="DisGeNET" id="5928"/>
<dbReference type="GeneCards" id="RBBP4"/>
<dbReference type="HGNC" id="HGNC:9887">
    <property type="gene designation" value="RBBP4"/>
</dbReference>
<dbReference type="HPA" id="ENSG00000162521">
    <property type="expression patterns" value="Low tissue specificity"/>
</dbReference>
<dbReference type="MIM" id="602923">
    <property type="type" value="gene"/>
</dbReference>
<dbReference type="neXtProt" id="NX_Q09028"/>
<dbReference type="OpenTargets" id="ENSG00000162521"/>
<dbReference type="PharmGKB" id="PA34251"/>
<dbReference type="VEuPathDB" id="HostDB:ENSG00000162521"/>
<dbReference type="eggNOG" id="KOG0264">
    <property type="taxonomic scope" value="Eukaryota"/>
</dbReference>
<dbReference type="GeneTree" id="ENSGT00940000153375"/>
<dbReference type="HOGENOM" id="CLU_020445_3_1_1"/>
<dbReference type="InParanoid" id="Q09028"/>
<dbReference type="OMA" id="PHEEGCL"/>
<dbReference type="OrthoDB" id="427795at2759"/>
<dbReference type="PAN-GO" id="Q09028">
    <property type="GO annotations" value="7 GO annotations based on evolutionary models"/>
</dbReference>
<dbReference type="PhylomeDB" id="Q09028"/>
<dbReference type="TreeFam" id="TF106485"/>
<dbReference type="PathwayCommons" id="Q09028"/>
<dbReference type="Reactome" id="R-HSA-1362277">
    <property type="pathway name" value="Transcription of E2F targets under negative control by DREAM complex"/>
</dbReference>
<dbReference type="Reactome" id="R-HSA-1362300">
    <property type="pathway name" value="Transcription of E2F targets under negative control by p107 (RBL1) and p130 (RBL2) in complex with HDAC1"/>
</dbReference>
<dbReference type="Reactome" id="R-HSA-1538133">
    <property type="pathway name" value="G0 and Early G1"/>
</dbReference>
<dbReference type="Reactome" id="R-HSA-156711">
    <property type="pathway name" value="Polo-like kinase mediated events"/>
</dbReference>
<dbReference type="Reactome" id="R-HSA-212300">
    <property type="pathway name" value="PRC2 methylates histones and DNA"/>
</dbReference>
<dbReference type="Reactome" id="R-HSA-2559580">
    <property type="pathway name" value="Oxidative Stress Induced Senescence"/>
</dbReference>
<dbReference type="Reactome" id="R-HSA-3214815">
    <property type="pathway name" value="HDACs deacetylate histones"/>
</dbReference>
<dbReference type="Reactome" id="R-HSA-3214841">
    <property type="pathway name" value="PKMTs methylate histone lysines"/>
</dbReference>
<dbReference type="Reactome" id="R-HSA-427389">
    <property type="pathway name" value="ERCC6 (CSB) and EHMT2 (G9a) positively regulate rRNA expression"/>
</dbReference>
<dbReference type="Reactome" id="R-HSA-5617472">
    <property type="pathway name" value="Activation of anterior HOX genes in hindbrain development during early embryogenesis"/>
</dbReference>
<dbReference type="Reactome" id="R-HSA-606279">
    <property type="pathway name" value="Deposition of new CENPA-containing nucleosomes at the centromere"/>
</dbReference>
<dbReference type="Reactome" id="R-HSA-6804758">
    <property type="pathway name" value="Regulation of TP53 Activity through Acetylation"/>
</dbReference>
<dbReference type="Reactome" id="R-HSA-69202">
    <property type="pathway name" value="Cyclin E associated events during G1/S transition"/>
</dbReference>
<dbReference type="Reactome" id="R-HSA-69205">
    <property type="pathway name" value="G1/S-Specific Transcription"/>
</dbReference>
<dbReference type="Reactome" id="R-HSA-69656">
    <property type="pathway name" value="Cyclin A:Cdk2-associated events at S phase entry"/>
</dbReference>
<dbReference type="Reactome" id="R-HSA-73762">
    <property type="pathway name" value="RNA Polymerase I Transcription Initiation"/>
</dbReference>
<dbReference type="Reactome" id="R-HSA-8943724">
    <property type="pathway name" value="Regulation of PTEN gene transcription"/>
</dbReference>
<dbReference type="Reactome" id="R-HSA-8953750">
    <property type="pathway name" value="Transcriptional Regulation by E2F6"/>
</dbReference>
<dbReference type="Reactome" id="R-HSA-9609690">
    <property type="pathway name" value="HCMV Early Events"/>
</dbReference>
<dbReference type="Reactome" id="R-HSA-9679191">
    <property type="pathway name" value="Potential therapeutics for SARS"/>
</dbReference>
<dbReference type="Reactome" id="R-HSA-9710421">
    <property type="pathway name" value="Defective pyroptosis"/>
</dbReference>
<dbReference type="Reactome" id="R-HSA-9843940">
    <property type="pathway name" value="Regulation of endogenous retroelements by KRAB-ZFP proteins"/>
</dbReference>
<dbReference type="Reactome" id="R-HSA-9844594">
    <property type="pathway name" value="Transcriptional regulation of brown and beige adipocyte differentiation by EBF2"/>
</dbReference>
<dbReference type="Reactome" id="R-HSA-9845323">
    <property type="pathway name" value="Regulation of endogenous retroelements by Piwi-interacting RNAs (piRNAs)"/>
</dbReference>
<dbReference type="SignaLink" id="Q09028"/>
<dbReference type="SIGNOR" id="Q09028"/>
<dbReference type="BioGRID-ORCS" id="5928">
    <property type="hits" value="787 hits in 1181 CRISPR screens"/>
</dbReference>
<dbReference type="CD-CODE" id="804901D1">
    <property type="entry name" value="Nuclear speckle"/>
</dbReference>
<dbReference type="CD-CODE" id="91857CE7">
    <property type="entry name" value="Nucleolus"/>
</dbReference>
<dbReference type="CD-CODE" id="DEE660B4">
    <property type="entry name" value="Stress granule"/>
</dbReference>
<dbReference type="ChiTaRS" id="RBBP4">
    <property type="organism name" value="human"/>
</dbReference>
<dbReference type="EvolutionaryTrace" id="Q09028"/>
<dbReference type="GeneWiki" id="RBBP4"/>
<dbReference type="GenomeRNAi" id="5928"/>
<dbReference type="Pharos" id="Q09028">
    <property type="development level" value="Tbio"/>
</dbReference>
<dbReference type="PRO" id="PR:Q09028"/>
<dbReference type="Proteomes" id="UP000005640">
    <property type="component" value="Chromosome 1"/>
</dbReference>
<dbReference type="RNAct" id="Q09028">
    <property type="molecule type" value="protein"/>
</dbReference>
<dbReference type="Bgee" id="ENSG00000162521">
    <property type="expression patterns" value="Expressed in ganglionic eminence and 191 other cell types or tissues"/>
</dbReference>
<dbReference type="ExpressionAtlas" id="Q09028">
    <property type="expression patterns" value="baseline and differential"/>
</dbReference>
<dbReference type="GO" id="GO:1904949">
    <property type="term" value="C:ATPase complex"/>
    <property type="evidence" value="ECO:0000314"/>
    <property type="project" value="ComplexPortal"/>
</dbReference>
<dbReference type="GO" id="GO:0033186">
    <property type="term" value="C:CAF-1 complex"/>
    <property type="evidence" value="ECO:0000314"/>
    <property type="project" value="UniProtKB"/>
</dbReference>
<dbReference type="GO" id="GO:0000785">
    <property type="term" value="C:chromatin"/>
    <property type="evidence" value="ECO:0000314"/>
    <property type="project" value="UniProtKB"/>
</dbReference>
<dbReference type="GO" id="GO:0000781">
    <property type="term" value="C:chromosome, telomeric region"/>
    <property type="evidence" value="ECO:0000314"/>
    <property type="project" value="UniProtKB"/>
</dbReference>
<dbReference type="GO" id="GO:0005829">
    <property type="term" value="C:cytosol"/>
    <property type="evidence" value="ECO:0000314"/>
    <property type="project" value="HPA"/>
</dbReference>
<dbReference type="GO" id="GO:0035098">
    <property type="term" value="C:ESC/E(Z) complex"/>
    <property type="evidence" value="ECO:0000314"/>
    <property type="project" value="UniProtKB"/>
</dbReference>
<dbReference type="GO" id="GO:0000118">
    <property type="term" value="C:histone deacetylase complex"/>
    <property type="evidence" value="ECO:0000314"/>
    <property type="project" value="UniProtKB"/>
</dbReference>
<dbReference type="GO" id="GO:0005654">
    <property type="term" value="C:nucleoplasm"/>
    <property type="evidence" value="ECO:0000314"/>
    <property type="project" value="HPA"/>
</dbReference>
<dbReference type="GO" id="GO:0005634">
    <property type="term" value="C:nucleus"/>
    <property type="evidence" value="ECO:0000314"/>
    <property type="project" value="UniProtKB"/>
</dbReference>
<dbReference type="GO" id="GO:0016581">
    <property type="term" value="C:NuRD complex"/>
    <property type="evidence" value="ECO:0000314"/>
    <property type="project" value="UniProtKB"/>
</dbReference>
<dbReference type="GO" id="GO:0016589">
    <property type="term" value="C:NURF complex"/>
    <property type="evidence" value="ECO:0000314"/>
    <property type="project" value="UniProtKB"/>
</dbReference>
<dbReference type="GO" id="GO:0032991">
    <property type="term" value="C:protein-containing complex"/>
    <property type="evidence" value="ECO:0000314"/>
    <property type="project" value="UniProtKB"/>
</dbReference>
<dbReference type="GO" id="GO:0070822">
    <property type="term" value="C:Sin3-type complex"/>
    <property type="evidence" value="ECO:0000303"/>
    <property type="project" value="BHF-UCL"/>
</dbReference>
<dbReference type="GO" id="GO:0042393">
    <property type="term" value="F:histone binding"/>
    <property type="evidence" value="ECO:0000314"/>
    <property type="project" value="UniProtKB"/>
</dbReference>
<dbReference type="GO" id="GO:0042826">
    <property type="term" value="F:histone deacetylase binding"/>
    <property type="evidence" value="ECO:0000353"/>
    <property type="project" value="BHF-UCL"/>
</dbReference>
<dbReference type="GO" id="GO:0000978">
    <property type="term" value="F:RNA polymerase II cis-regulatory region sequence-specific DNA binding"/>
    <property type="evidence" value="ECO:0007669"/>
    <property type="project" value="Ensembl"/>
</dbReference>
<dbReference type="GO" id="GO:0007420">
    <property type="term" value="P:brain development"/>
    <property type="evidence" value="ECO:0000303"/>
    <property type="project" value="ComplexPortal"/>
</dbReference>
<dbReference type="GO" id="GO:0006338">
    <property type="term" value="P:chromatin remodeling"/>
    <property type="evidence" value="ECO:0000314"/>
    <property type="project" value="HGNC-UCL"/>
</dbReference>
<dbReference type="GO" id="GO:0006281">
    <property type="term" value="P:DNA repair"/>
    <property type="evidence" value="ECO:0007669"/>
    <property type="project" value="UniProtKB-KW"/>
</dbReference>
<dbReference type="GO" id="GO:0006260">
    <property type="term" value="P:DNA replication"/>
    <property type="evidence" value="ECO:0007669"/>
    <property type="project" value="UniProtKB-KW"/>
</dbReference>
<dbReference type="GO" id="GO:0006335">
    <property type="term" value="P:DNA replication-dependent chromatin assembly"/>
    <property type="evidence" value="ECO:0000314"/>
    <property type="project" value="GO_Central"/>
</dbReference>
<dbReference type="GO" id="GO:0030336">
    <property type="term" value="P:negative regulation of cell migration"/>
    <property type="evidence" value="ECO:0000303"/>
    <property type="project" value="ComplexPortal"/>
</dbReference>
<dbReference type="GO" id="GO:0008285">
    <property type="term" value="P:negative regulation of cell population proliferation"/>
    <property type="evidence" value="ECO:0000304"/>
    <property type="project" value="ProtInc"/>
</dbReference>
<dbReference type="GO" id="GO:0045892">
    <property type="term" value="P:negative regulation of DNA-templated transcription"/>
    <property type="evidence" value="ECO:0000303"/>
    <property type="project" value="ComplexPortal"/>
</dbReference>
<dbReference type="GO" id="GO:1902455">
    <property type="term" value="P:negative regulation of stem cell population maintenance"/>
    <property type="evidence" value="ECO:0000303"/>
    <property type="project" value="ComplexPortal"/>
</dbReference>
<dbReference type="GO" id="GO:0000122">
    <property type="term" value="P:negative regulation of transcription by RNA polymerase II"/>
    <property type="evidence" value="ECO:0000303"/>
    <property type="project" value="ComplexPortal"/>
</dbReference>
<dbReference type="GO" id="GO:0030512">
    <property type="term" value="P:negative regulation of transforming growth factor beta receptor signaling pathway"/>
    <property type="evidence" value="ECO:0000303"/>
    <property type="project" value="ComplexPortal"/>
</dbReference>
<dbReference type="GO" id="GO:0006334">
    <property type="term" value="P:nucleosome assembly"/>
    <property type="evidence" value="ECO:0000314"/>
    <property type="project" value="GO_Central"/>
</dbReference>
<dbReference type="GO" id="GO:0045893">
    <property type="term" value="P:positive regulation of DNA-templated transcription"/>
    <property type="evidence" value="ECO:0000303"/>
    <property type="project" value="ComplexPortal"/>
</dbReference>
<dbReference type="GO" id="GO:1902459">
    <property type="term" value="P:positive regulation of stem cell population maintenance"/>
    <property type="evidence" value="ECO:0000303"/>
    <property type="project" value="ComplexPortal"/>
</dbReference>
<dbReference type="GO" id="GO:0042659">
    <property type="term" value="P:regulation of cell fate specification"/>
    <property type="evidence" value="ECO:0000303"/>
    <property type="project" value="ComplexPortal"/>
</dbReference>
<dbReference type="GO" id="GO:0006355">
    <property type="term" value="P:regulation of DNA-templated transcription"/>
    <property type="evidence" value="ECO:0000314"/>
    <property type="project" value="ComplexPortal"/>
</dbReference>
<dbReference type="GO" id="GO:2000736">
    <property type="term" value="P:regulation of stem cell differentiation"/>
    <property type="evidence" value="ECO:0000303"/>
    <property type="project" value="ComplexPortal"/>
</dbReference>
<dbReference type="FunFam" id="2.130.10.10:FF:000021">
    <property type="entry name" value="histone-binding protein RBBP4 isoform X1"/>
    <property type="match status" value="1"/>
</dbReference>
<dbReference type="Gene3D" id="2.130.10.10">
    <property type="entry name" value="YVTN repeat-like/Quinoprotein amine dehydrogenase"/>
    <property type="match status" value="1"/>
</dbReference>
<dbReference type="IDEAL" id="IID00317"/>
<dbReference type="InterPro" id="IPR020472">
    <property type="entry name" value="G-protein_beta_WD-40_rep"/>
</dbReference>
<dbReference type="InterPro" id="IPR022052">
    <property type="entry name" value="Histone-bd_RBBP4-like_N"/>
</dbReference>
<dbReference type="InterPro" id="IPR015943">
    <property type="entry name" value="WD40/YVTN_repeat-like_dom_sf"/>
</dbReference>
<dbReference type="InterPro" id="IPR019775">
    <property type="entry name" value="WD40_repeat_CS"/>
</dbReference>
<dbReference type="InterPro" id="IPR036322">
    <property type="entry name" value="WD40_repeat_dom_sf"/>
</dbReference>
<dbReference type="InterPro" id="IPR001680">
    <property type="entry name" value="WD40_rpt"/>
</dbReference>
<dbReference type="InterPro" id="IPR050459">
    <property type="entry name" value="WD_repeat_RBAP46/RBAP48/MSI1"/>
</dbReference>
<dbReference type="PANTHER" id="PTHR22850">
    <property type="entry name" value="WD40 REPEAT FAMILY"/>
    <property type="match status" value="1"/>
</dbReference>
<dbReference type="Pfam" id="PF12265">
    <property type="entry name" value="CAF1C_H4-bd"/>
    <property type="match status" value="1"/>
</dbReference>
<dbReference type="Pfam" id="PF00400">
    <property type="entry name" value="WD40"/>
    <property type="match status" value="5"/>
</dbReference>
<dbReference type="PRINTS" id="PR00320">
    <property type="entry name" value="GPROTEINBRPT"/>
</dbReference>
<dbReference type="SMART" id="SM00320">
    <property type="entry name" value="WD40"/>
    <property type="match status" value="6"/>
</dbReference>
<dbReference type="SUPFAM" id="SSF50978">
    <property type="entry name" value="WD40 repeat-like"/>
    <property type="match status" value="1"/>
</dbReference>
<dbReference type="PROSITE" id="PS00678">
    <property type="entry name" value="WD_REPEATS_1"/>
    <property type="match status" value="3"/>
</dbReference>
<dbReference type="PROSITE" id="PS50082">
    <property type="entry name" value="WD_REPEATS_2"/>
    <property type="match status" value="5"/>
</dbReference>
<dbReference type="PROSITE" id="PS50294">
    <property type="entry name" value="WD_REPEATS_REGION"/>
    <property type="match status" value="1"/>
</dbReference>
<sequence length="425" mass="47656">MADKEAAFDDAVEERVINEEYKIWKKNTPFLYDLVMTHALEWPSLTAQWLPDVTRPEGKDFSIHRLVLGTHTSDEQNHLVIASVQLPNDDAQFDASHYDSEKGEFGGFGSVSGKIEIEIKINHEGEVNRARYMPQNPCIIATKTPSSDVLVFDYTKHPSKPDPSGECNPDLRLRGHQKEGYGLSWNPNLSGHLLSASDDHTICLWDISAVPKEGKVVDAKTIFTGHTAVVEDVSWHLLHESLFGSVADDQKLMIWDTRSNNTSKPSHSVDAHTAEVNCLSFNPYSEFILATGSADKTVALWDLRNLKLKLHSFESHKDEIFQVQWSPHNETILASSGTDRRLNVWDLSKIGEEQSPEDAEDGPPELLFIHGGHTAKISDFSWNPNEPWVICSVSEDNIMQVWQMAENIYNDEDPEGSVDPEGQGS</sequence>
<name>RBBP4_HUMAN</name>
<comment type="function">
    <text evidence="5 14 15 18 25 26 29 31 33 34">Core histone-binding subunit that may target chromatin assembly factors, chromatin remodeling factors and histone deacetylases to their histone substrates in a manner that is regulated by nucleosomal DNA (PubMed:10866654). Component of the chromatin assembly factor 1 (CAF-1) complex, which is required for chromatin assembly following DNA replication and DNA repair (PubMed:8858152). Component of the core histone deacetylase (HDAC) complex, which promotes histone deacetylation and consequent transcriptional repression (PubMed:9150135). Component of the nucleosome remodeling and histone deacetylase complex (the NuRD complex), which promotes transcriptional repression by histone deacetylation and nucleosome remodeling (PubMed:16428440, PubMed:28977666, PubMed:39460621). Component of the PRC2 complex, which promotes repression of homeotic genes during development (PubMed:29499137, PubMed:31959557). Component of the NURF (nucleosome remodeling factor) complex (PubMed:14609955, PubMed:15310751).</text>
</comment>
<comment type="subunit">
    <text evidence="1 2 3 4 5 6 7 8 9 10 11 12 13 14 15 16 17 18 19 20 21 22 23 24 25 26 27 28 29 30 31 32 33 34 35 36 37">Binds directly to helix 1 of the histone fold of histone H4, a region that is not accessible when H4 is in chromatin (PubMed:24920672, PubMed:8858152, PubMed:9427644). Subunit of the chromatin assembly factor 1 (CAF-1) complex, which is composed of RBBP4, CHAF1B and CHAF1A (PubMed:8858152). Subunit of the core histone deacetylase (HDAC) complex, which is composed of HDAC1, HDAC2, RBBP4 and RBBP7 (PubMed:9150135). The core HDAC complex associates with SIN3A, ARID4B/SAP180, SAP18, SAP30, SAP130, SUDS3/SAP45 and possibly ARID4A/RBP1 and ING1 to form the SIN3 HDAC complex (PubMed:11118440, PubMed:11784859, PubMed:9150135, PubMed:9651585). Component of the nucleosome remodeling and deacetylase (NuRD) repressor complex, composed of core proteins MTA1, MTA2, MTA3, RBBP4, RBBP7, HDAC1, HDAC2, MBD2, MBD3, and peripherally associated proteins CDK2AP1, CDK2AP2, GATAD2A, GATAD2B, CHD3, CHD4 and CHD5 (PubMed:10444591, PubMed:11102443, PubMed:16428440, PubMed:28977666, PubMed:33283408, PubMed:9790534, PubMed:39460621). The exact stoichiometry of the NuRD complex is unknown, and some subunits such as MBD2 and MBD3, GATAD2A and GATAD2B, and CHD3, CHD4 and CHD5 define mutually exclusive NuRD complexes (PubMed:16428440, PubMed:28977666, PubMed:33283408). Interacts with ZNF512B; the interaction is direct and may play a role in repressing gene expression (PubMed:39460621). The NuRD complex may also interact with MBD3L1 and MBD3L2 (PubMed:15456747, PubMed:15701600). Component of the PRC2 complex, which consists of the core subunits EED, EZH1 or EZH2, SUZ12, and RBBP4, and various combinations of accessory subunits including AEBP2, JARID2, PHF19, MTF2 and EPOP (PubMed:12351676, PubMed:12435631, PubMed:29499137, PubMed:31959557). Forms a monomeric PRC2.2 (class 2) complex consisting of at least SUZ12, RBBP4, AEBP2 and JARID2 (PubMed:29499137). Forms a dimeric PRC2.1 (class 1, PRC-PCL) complex consisting of at least SUZ12, RBBP4, and PHF19; PHF19 stabilizes the dimeric structure which enhances PRC2 interaction with chromatin (PubMed:31959557). Component of the NURF-1 ISWI chromatin remodeling complex (also called the nucleosome-remodeling factor (NURF) complex) at least composed of SMARCA1 (isoform 2), BPTF, RBBP4 and RBBP7 (PubMed:14609955, PubMed:15310751). Within the complex interacts with isoform 2 of SMARCA1 (PubMed:14609955, PubMed:15310751). Component of the BPFT-SMARCA1 complex at least composed of SMARCA1 (isoform 1), BPFT, RBBP4 and RBBP7; the complex is catalytically inactive and does not remodel chromatin (PubMed:15310751). Within the complex interacts with isoform 1 of SMARCA1 (PubMed:15310751). Interacts with the ISWI chromatin remodeling complex component SMARCA5; the interaction is direct (PubMed:12198550). Interacts with the viral protein-binding domain of the retinoblastoma protein (RB1) (PubMed:10734134, PubMed:7503932). Component of the DREAM complex (also named LINC complex) at least composed of E2F4, E2F5, LIN9, LIN37, LIN52, LIN54, MYBL1, MYBL2, RBL1, RBL2, RBBP4, TFDP1 and TFDP2 (PubMed:17531812, PubMed:17671431). The complex exists in quiescent cells where it represses cell cycle-dependent genes (PubMed:17531812, PubMed:17671431). It dissociates in S phase when LIN9, LIN37, LIN52 and LIN54 form a subcomplex that binds to MYBL2 (PubMed:17531812, PubMed:17671431). Found in a complex composed of at least SINHCAF, SIN3A, HDAC1, SAP30, RBBP4, OGT and TET1 (By similarity). Interacts with ZNF827; the interaction is direct and recruits RBBP4 to telomeres (PubMed:30045876). Interacts with MTA1; the interaction is direct and mutually exclusive with binding histone H4 (PubMed:12920132, PubMed:24920672). Interacts with ARMC12 (via ARM domains) (PubMed:30026490). Interacts with BRCA1 (PubMed:10220405). Interacts with CDK2AP1 (PubMed:20523938). Interacts with CREBBP, and this interaction may be enhanced by the binding of phosphorylated CREB1 to CREBBP (PubMed:10866654). Interacts with ERCC6 (PubMed:26030138). Interacts with HDAC7 (By similarity). Interacts with PHF6 (PubMed:24554700). Interacts with PWWP2B (By similarity). Interacts with SPEN/MINT (PubMed:11331609). Interacts with SUV39H1 (By similarity).</text>
</comment>
<comment type="interaction">
    <interactant intactId="EBI-620823">
        <id>Q09028</id>
    </interactant>
    <interactant intactId="EBI-25830928">
        <id>P02768-3</id>
        <label>ALB</label>
    </interactant>
    <organismsDiffer>false</organismsDiffer>
    <experiments>3</experiments>
</comment>
<comment type="interaction">
    <interactant intactId="EBI-620823">
        <id>Q09028</id>
    </interactant>
    <interactant intactId="EBI-3926971">
        <id>P30038</id>
        <label>ALDH4A1</label>
    </interactant>
    <organismsDiffer>false</organismsDiffer>
    <experiments>3</experiments>
</comment>
<comment type="interaction">
    <interactant intactId="EBI-620823">
        <id>Q09028</id>
    </interactant>
    <interactant intactId="EBI-930964">
        <id>P54253</id>
        <label>ATXN1</label>
    </interactant>
    <organismsDiffer>false</organismsDiffer>
    <experiments>3</experiments>
</comment>
<comment type="interaction">
    <interactant intactId="EBI-620823">
        <id>Q09028</id>
    </interactant>
    <interactant intactId="EBI-747185">
        <id>O95817</id>
        <label>BAG3</label>
    </interactant>
    <organismsDiffer>false</organismsDiffer>
    <experiments>3</experiments>
</comment>
<comment type="interaction">
    <interactant intactId="EBI-620823">
        <id>Q09028</id>
    </interactant>
    <interactant intactId="EBI-718729">
        <id>P55212</id>
        <label>CASP6</label>
    </interactant>
    <organismsDiffer>false</organismsDiffer>
    <experiments>3</experiments>
</comment>
<comment type="interaction">
    <interactant intactId="EBI-620823">
        <id>Q09028</id>
    </interactant>
    <interactant intactId="EBI-79333">
        <id>P36544</id>
        <label>CHRNA7</label>
    </interactant>
    <organismsDiffer>false</organismsDiffer>
    <experiments>3</experiments>
</comment>
<comment type="interaction">
    <interactant intactId="EBI-620823">
        <id>Q09028</id>
    </interactant>
    <interactant intactId="EBI-16041593">
        <id>O94985-2</id>
        <label>CLSTN1</label>
    </interactant>
    <organismsDiffer>false</organismsDiffer>
    <experiments>3</experiments>
</comment>
<comment type="interaction">
    <interactant intactId="EBI-620823">
        <id>Q09028</id>
    </interactant>
    <interactant intactId="EBI-9641086">
        <id>P21333-2</id>
        <label>FLNA</label>
    </interactant>
    <organismsDiffer>false</organismsDiffer>
    <experiments>3</experiments>
</comment>
<comment type="interaction">
    <interactant intactId="EBI-620823">
        <id>Q09028</id>
    </interactant>
    <interactant intactId="EBI-2339359">
        <id>O14929</id>
        <label>HAT1</label>
    </interactant>
    <organismsDiffer>false</organismsDiffer>
    <experiments>7</experiments>
</comment>
<comment type="interaction">
    <interactant intactId="EBI-620823">
        <id>Q09028</id>
    </interactant>
    <interactant intactId="EBI-301834">
        <id>Q13547</id>
        <label>HDAC1</label>
    </interactant>
    <organismsDiffer>false</organismsDiffer>
    <experiments>14</experiments>
</comment>
<comment type="interaction">
    <interactant intactId="EBI-620823">
        <id>Q09028</id>
    </interactant>
    <interactant intactId="EBI-473886">
        <id>O00291</id>
        <label>HIP1</label>
    </interactant>
    <organismsDiffer>false</organismsDiffer>
    <experiments>3</experiments>
</comment>
<comment type="interaction">
    <interactant intactId="EBI-620823">
        <id>Q09028</id>
    </interactant>
    <interactant intactId="EBI-21591415">
        <id>P13473-2</id>
        <label>LAMP2</label>
    </interactant>
    <organismsDiffer>false</organismsDiffer>
    <experiments>3</experiments>
</comment>
<comment type="interaction">
    <interactant intactId="EBI-620823">
        <id>Q09028</id>
    </interactant>
    <interactant intactId="EBI-1384862">
        <id>Q03112</id>
        <label>MECOM</label>
    </interactant>
    <organismsDiffer>false</organismsDiffer>
    <experiments>4</experiments>
</comment>
<comment type="interaction">
    <interactant intactId="EBI-620823">
        <id>Q09028</id>
    </interactant>
    <interactant intactId="EBI-714236">
        <id>Q13330</id>
        <label>MTA1</label>
    </interactant>
    <organismsDiffer>false</organismsDiffer>
    <experiments>14</experiments>
</comment>
<comment type="interaction">
    <interactant intactId="EBI-620823">
        <id>Q09028</id>
    </interactant>
    <interactant intactId="EBI-395883">
        <id>P07237</id>
        <label>P4HB</label>
    </interactant>
    <organismsDiffer>false</organismsDiffer>
    <experiments>3</experiments>
</comment>
<comment type="interaction">
    <interactant intactId="EBI-620823">
        <id>Q09028</id>
    </interactant>
    <interactant intactId="EBI-12188331">
        <id>P60201-2</id>
        <label>PLP1</label>
    </interactant>
    <organismsDiffer>false</organismsDiffer>
    <experiments>3</experiments>
</comment>
<comment type="interaction">
    <interactant intactId="EBI-620823">
        <id>Q09028</id>
    </interactant>
    <interactant intactId="EBI-2795620">
        <id>Q9HAZ2</id>
        <label>PRDM16</label>
    </interactant>
    <organismsDiffer>false</organismsDiffer>
    <experiments>3</experiments>
</comment>
<comment type="interaction">
    <interactant intactId="EBI-620823">
        <id>Q09028</id>
    </interactant>
    <interactant intactId="EBI-286642">
        <id>P62826</id>
        <label>RAN</label>
    </interactant>
    <organismsDiffer>false</organismsDiffer>
    <experiments>3</experiments>
</comment>
<comment type="interaction">
    <interactant intactId="EBI-620823">
        <id>Q09028</id>
    </interactant>
    <interactant intactId="EBI-2623095">
        <id>Q9Y371</id>
        <label>SH3GLB1</label>
    </interactant>
    <organismsDiffer>false</organismsDiffer>
    <experiments>3</experiments>
</comment>
<comment type="interaction">
    <interactant intactId="EBI-620823">
        <id>Q09028</id>
    </interactant>
    <interactant intactId="EBI-990792">
        <id>P00441</id>
        <label>SOD1</label>
    </interactant>
    <organismsDiffer>false</organismsDiffer>
    <experiments>3</experiments>
</comment>
<comment type="interaction">
    <interactant intactId="EBI-620823">
        <id>Q09028</id>
    </interactant>
    <interactant intactId="EBI-1186119">
        <id>P51692</id>
        <label>STAT5B</label>
    </interactant>
    <organismsDiffer>false</organismsDiffer>
    <experiments>3</experiments>
</comment>
<comment type="interaction">
    <interactant intactId="EBI-620823">
        <id>Q09028</id>
    </interactant>
    <interactant intactId="EBI-1054052">
        <id>P31948</id>
        <label>STIP1</label>
    </interactant>
    <organismsDiffer>false</organismsDiffer>
    <experiments>3</experiments>
</comment>
<comment type="interaction">
    <interactant intactId="EBI-620823">
        <id>Q09028</id>
    </interactant>
    <interactant intactId="EBI-372899">
        <id>Q13148</id>
        <label>TARDBP</label>
    </interactant>
    <organismsDiffer>false</organismsDiffer>
    <experiments>6</experiments>
</comment>
<comment type="interaction">
    <interactant intactId="EBI-620823">
        <id>Q09028</id>
    </interactant>
    <interactant intactId="EBI-3942619">
        <id>Q8IX07</id>
        <label>ZFPM1</label>
    </interactant>
    <organismsDiffer>false</organismsDiffer>
    <experiments>5</experiments>
</comment>
<comment type="interaction">
    <interactant intactId="EBI-620823">
        <id>Q09028</id>
    </interactant>
    <interactant intactId="EBI-10297046">
        <id>Q9BRL8</id>
    </interactant>
    <organismsDiffer>false</organismsDiffer>
    <experiments>3</experiments>
</comment>
<comment type="subcellular location">
    <subcellularLocation>
        <location evidence="2 5 14 21 25 26 27 30 31 33">Nucleus</location>
    </subcellularLocation>
    <subcellularLocation>
        <location evidence="28">Chromosome</location>
        <location evidence="28">Telomere</location>
    </subcellularLocation>
    <text evidence="26">Localizes to chromatin as part of the PRC2 complex.</text>
</comment>
<comment type="alternative products">
    <event type="alternative splicing"/>
    <isoform>
        <id>Q09028-1</id>
        <name>1</name>
        <sequence type="displayed"/>
    </isoform>
    <isoform>
        <id>Q09028-2</id>
        <name>2</name>
        <sequence type="described" ref="VSP_040088"/>
    </isoform>
    <isoform>
        <id>Q09028-3</id>
        <name>3</name>
        <sequence type="described" ref="VSP_040089"/>
    </isoform>
    <isoform>
        <id>Q09028-4</id>
        <name>4</name>
        <sequence type="described" ref="VSP_040087"/>
    </isoform>
</comment>
<comment type="tissue specificity">
    <text evidence="27">Expressed in neuroblastoma cells.</text>
</comment>
<comment type="similarity">
    <text evidence="43">Belongs to the WD repeat RBAP46/RBAP48/MSI1 family.</text>
</comment>